<keyword id="KW-0002">3D-structure</keyword>
<keyword id="KW-0025">Alternative splicing</keyword>
<keyword id="KW-0037">Angiogenesis</keyword>
<keyword id="KW-0067">ATP-binding</keyword>
<keyword id="KW-1003">Cell membrane</keyword>
<keyword id="KW-0963">Cytoplasm</keyword>
<keyword id="KW-0903">Direct protein sequencing</keyword>
<keyword id="KW-0225">Disease variant</keyword>
<keyword id="KW-1015">Disulfide bond</keyword>
<keyword id="KW-0325">Glycoprotein</keyword>
<keyword id="KW-0393">Immunoglobulin domain</keyword>
<keyword id="KW-0418">Kinase</keyword>
<keyword id="KW-0472">Membrane</keyword>
<keyword id="KW-0547">Nucleotide-binding</keyword>
<keyword id="KW-0539">Nucleus</keyword>
<keyword id="KW-0597">Phosphoprotein</keyword>
<keyword id="KW-1267">Proteomics identification</keyword>
<keyword id="KW-0675">Receptor</keyword>
<keyword id="KW-1185">Reference proteome</keyword>
<keyword id="KW-0677">Repeat</keyword>
<keyword id="KW-0964">Secreted</keyword>
<keyword id="KW-0732">Signal</keyword>
<keyword id="KW-0808">Transferase</keyword>
<keyword id="KW-0812">Transmembrane</keyword>
<keyword id="KW-1133">Transmembrane helix</keyword>
<keyword id="KW-0829">Tyrosine-protein kinase</keyword>
<organism>
    <name type="scientific">Homo sapiens</name>
    <name type="common">Human</name>
    <dbReference type="NCBI Taxonomy" id="9606"/>
    <lineage>
        <taxon>Eukaryota</taxon>
        <taxon>Metazoa</taxon>
        <taxon>Chordata</taxon>
        <taxon>Craniata</taxon>
        <taxon>Vertebrata</taxon>
        <taxon>Euteleostomi</taxon>
        <taxon>Mammalia</taxon>
        <taxon>Eutheria</taxon>
        <taxon>Euarchontoglires</taxon>
        <taxon>Primates</taxon>
        <taxon>Haplorrhini</taxon>
        <taxon>Catarrhini</taxon>
        <taxon>Hominidae</taxon>
        <taxon>Homo</taxon>
    </lineage>
</organism>
<proteinExistence type="evidence at protein level"/>
<feature type="signal peptide" evidence="14">
    <location>
        <begin position="1"/>
        <end position="24"/>
    </location>
</feature>
<feature type="chain" id="PRO_0000016776" description="Vascular endothelial growth factor receptor 3">
    <location>
        <begin position="25"/>
        <end position="1363"/>
    </location>
</feature>
<feature type="topological domain" description="Extracellular" evidence="1">
    <location>
        <begin position="25"/>
        <end position="775"/>
    </location>
</feature>
<feature type="transmembrane region" description="Helical" evidence="1">
    <location>
        <begin position="776"/>
        <end position="796"/>
    </location>
</feature>
<feature type="topological domain" description="Cytoplasmic" evidence="1">
    <location>
        <begin position="797"/>
        <end position="1363"/>
    </location>
</feature>
<feature type="domain" description="Ig-like C2-type 1">
    <location>
        <begin position="30"/>
        <end position="127"/>
    </location>
</feature>
<feature type="domain" description="Ig-like C2-type 2">
    <location>
        <begin position="151"/>
        <end position="213"/>
    </location>
</feature>
<feature type="domain" description="Ig-like C2-type 3">
    <location>
        <begin position="219"/>
        <end position="326"/>
    </location>
</feature>
<feature type="domain" description="Ig-like C2-type 4">
    <location>
        <begin position="331"/>
        <end position="415"/>
    </location>
</feature>
<feature type="domain" description="Ig-like C2-type 5">
    <location>
        <begin position="422"/>
        <end position="552"/>
    </location>
</feature>
<feature type="domain" description="Ig-like C2-type 6">
    <location>
        <begin position="555"/>
        <end position="671"/>
    </location>
</feature>
<feature type="domain" description="Ig-like C2-type 7">
    <location>
        <begin position="678"/>
        <end position="764"/>
    </location>
</feature>
<feature type="domain" description="Protein kinase" evidence="3">
    <location>
        <begin position="845"/>
        <end position="1173"/>
    </location>
</feature>
<feature type="region of interest" description="Disordered" evidence="5">
    <location>
        <begin position="1291"/>
        <end position="1331"/>
    </location>
</feature>
<feature type="active site" description="Proton acceptor" evidence="3 4">
    <location>
        <position position="1037"/>
    </location>
</feature>
<feature type="binding site" evidence="3">
    <location>
        <begin position="851"/>
        <end position="859"/>
    </location>
    <ligand>
        <name>ATP</name>
        <dbReference type="ChEBI" id="CHEBI:30616"/>
    </ligand>
</feature>
<feature type="binding site" evidence="51">
    <location>
        <position position="879"/>
    </location>
    <ligand>
        <name>ATP</name>
        <dbReference type="ChEBI" id="CHEBI:30616"/>
    </ligand>
</feature>
<feature type="modified residue" description="Phosphotyrosine; by SRC" evidence="29">
    <location>
        <position position="830"/>
    </location>
</feature>
<feature type="modified residue" description="Phosphotyrosine; by SRC" evidence="29">
    <location>
        <position position="833"/>
    </location>
</feature>
<feature type="modified residue" description="Phosphotyrosine; by SRC" evidence="29">
    <location>
        <position position="853"/>
    </location>
</feature>
<feature type="modified residue" description="Phosphotyrosine; by autocatalysis and SRC" evidence="16 29">
    <location>
        <position position="1063"/>
    </location>
</feature>
<feature type="modified residue" description="Phosphotyrosine; by autocatalysis" evidence="16 29">
    <location>
        <position position="1068"/>
    </location>
</feature>
<feature type="modified residue" description="Phosphotyrosine; by autocatalysis" evidence="10 16">
    <location>
        <position position="1230"/>
    </location>
</feature>
<feature type="modified residue" description="Phosphotyrosine; by autocatalysis" evidence="10 16">
    <location>
        <position position="1231"/>
    </location>
</feature>
<feature type="modified residue" description="Phosphotyrosine; by autocatalysis" evidence="10">
    <location>
        <position position="1265"/>
    </location>
</feature>
<feature type="modified residue" description="Phosphotyrosine; by autocatalysis and SRC" evidence="10 29">
    <location>
        <position position="1333"/>
    </location>
</feature>
<feature type="modified residue" description="Phosphotyrosine; by autocatalysis and SRC" evidence="10 16 29">
    <location>
        <position position="1337"/>
    </location>
</feature>
<feature type="modified residue" description="Phosphotyrosine; by autocatalysis" evidence="10">
    <location>
        <position position="1363"/>
    </location>
</feature>
<feature type="glycosylation site" description="N-linked (GlcNAc...) asparagine" evidence="33 52">
    <location>
        <position position="33"/>
    </location>
</feature>
<feature type="glycosylation site" description="N-linked (GlcNAc...) asparagine" evidence="33 52">
    <location>
        <position position="104"/>
    </location>
</feature>
<feature type="glycosylation site" description="N-linked (GlcNAc...) asparagine" evidence="1">
    <location>
        <position position="166"/>
    </location>
</feature>
<feature type="glycosylation site" description="N-linked (GlcNAc...) asparagine" evidence="1">
    <location>
        <position position="251"/>
    </location>
</feature>
<feature type="glycosylation site" description="N-linked (GlcNAc...) asparagine" evidence="1">
    <location>
        <position position="299"/>
    </location>
</feature>
<feature type="glycosylation site" description="N-linked (GlcNAc...) asparagine" evidence="33 52">
    <location>
        <position position="411"/>
    </location>
</feature>
<feature type="glycosylation site" description="N-linked (GlcNAc...) asparagine" evidence="33 52">
    <location>
        <position position="515"/>
    </location>
</feature>
<feature type="glycosylation site" description="N-linked (GlcNAc...) asparagine" evidence="17">
    <location>
        <position position="527"/>
    </location>
</feature>
<feature type="glycosylation site" description="N-linked (GlcNAc...) asparagine" evidence="1">
    <location>
        <position position="594"/>
    </location>
</feature>
<feature type="glycosylation site" description="N-linked (GlcNAc...) asparagine" evidence="1">
    <location>
        <position position="683"/>
    </location>
</feature>
<feature type="glycosylation site" description="N-linked (GlcNAc...) asparagine" evidence="1">
    <location>
        <position position="690"/>
    </location>
</feature>
<feature type="glycosylation site" description="N-linked (GlcNAc...) asparagine" evidence="1">
    <location>
        <position position="758"/>
    </location>
</feature>
<feature type="disulfide bond" evidence="2 33">
    <location>
        <begin position="51"/>
        <end position="111"/>
    </location>
</feature>
<feature type="disulfide bond" evidence="2 33">
    <location>
        <begin position="158"/>
        <end position="206"/>
    </location>
</feature>
<feature type="disulfide bond" evidence="2">
    <location>
        <begin position="252"/>
        <end position="310"/>
    </location>
</feature>
<feature type="disulfide bond" evidence="2 33">
    <location>
        <begin position="445"/>
        <end position="534"/>
    </location>
</feature>
<feature type="disulfide bond" evidence="33">
    <location>
        <begin position="466"/>
        <end position="486"/>
    </location>
</feature>
<feature type="disulfide bond" evidence="2">
    <location>
        <begin position="578"/>
        <end position="653"/>
    </location>
</feature>
<feature type="disulfide bond" evidence="2">
    <location>
        <begin position="699"/>
        <end position="751"/>
    </location>
</feature>
<feature type="splice variant" id="VSP_041993" description="In isoform 3." evidence="47">
    <original>VDLADSNQKLSIQRVREEDAGRYLCSVCNAKGCVNSSASVAV</original>
    <variation>REGGPGEGQVRRPARPTIPNPGGPAPPPHPLQESTWRTPTRS</variation>
    <location>
        <begin position="724"/>
        <end position="765"/>
    </location>
</feature>
<feature type="splice variant" id="VSP_041994" description="In isoform 3." evidence="47">
    <location>
        <begin position="766"/>
        <end position="1298"/>
    </location>
</feature>
<feature type="splice variant" id="VSP_041995" description="In isoform 2." evidence="44 45 46 48 49 50">
    <original>SCKGPGQNVAVTRAHPDSQGRRRRPERGARGGQVFYNSEYGELSEPSEEDHCSPSARVTFFTDNSY</original>
    <variation>R</variation>
    <location>
        <begin position="1298"/>
        <end position="1363"/>
    </location>
</feature>
<feature type="sequence variant" id="VAR_083806" description="In CHTD7." evidence="35">
    <location>
        <begin position="82"/>
        <end position="1363"/>
    </location>
</feature>
<feature type="sequence variant" id="VAR_042062" description="In dbSNP:rs34221241." evidence="22">
    <original>N</original>
    <variation>D</variation>
    <location>
        <position position="149"/>
    </location>
</feature>
<feature type="sequence variant" id="VAR_083807" description="In CHTD7." evidence="35">
    <location>
        <begin position="361"/>
        <end position="1363"/>
    </location>
</feature>
<feature type="sequence variant" id="VAR_042063" description="In a renal clear cell carcinoma sample; somatic mutation; dbSNP:rs372947534." evidence="22">
    <original>R</original>
    <variation>C</variation>
    <location>
        <position position="378"/>
    </location>
</feature>
<feature type="sequence variant" id="VAR_018407" description="In dbSNP:rs307826." evidence="9 22">
    <original>T</original>
    <variation>A</variation>
    <location>
        <position position="494"/>
    </location>
</feature>
<feature type="sequence variant" id="VAR_034379" description="In dbSNP:rs35874891." evidence="22">
    <original>N</original>
    <variation>S</variation>
    <location>
        <position position="527"/>
    </location>
</feature>
<feature type="sequence variant" id="VAR_018408" description="In dbSNP:rs55667289." evidence="6 22">
    <original>P</original>
    <variation>S</variation>
    <location>
        <position position="641"/>
    </location>
</feature>
<feature type="sequence variant" id="VAR_083808" description="In CHTD7." evidence="35">
    <location>
        <begin position="736"/>
        <end position="1363"/>
    </location>
</feature>
<feature type="sequence variant" id="VAR_083809" description="In CHTD7; uncertain significance." evidence="36">
    <location>
        <position position="741"/>
    </location>
</feature>
<feature type="sequence variant" id="VAR_083810" description="In CHTD7." evidence="36">
    <location>
        <begin position="833"/>
        <end position="1363"/>
    </location>
</feature>
<feature type="sequence variant" id="VAR_074044" description="In LMPHM1; recessive form; results in reduced autophosphorylation; results in impaired ligand-induced receptor internalization and downstream signaling; dbSNP:rs121909657." evidence="25">
    <original>A</original>
    <variation>T</variation>
    <location>
        <position position="855"/>
    </location>
</feature>
<feature type="sequence variant" id="VAR_018409" description="In LMPHM1; loss of kinase activity; dbSNP:rs267606818." evidence="6 13">
    <original>G</original>
    <variation>R</variation>
    <location>
        <position position="857"/>
    </location>
</feature>
<feature type="sequence variant" id="VAR_042064" description="In dbSNP:rs35171798." evidence="22">
    <original>H</original>
    <variation>Y</variation>
    <location>
        <position position="868"/>
    </location>
</feature>
<feature type="sequence variant" id="VAR_074045" description="In LMPHM1; dbSNP:rs121909654." evidence="20">
    <original>V</original>
    <variation>M</variation>
    <location>
        <position position="878"/>
    </location>
</feature>
<feature type="sequence variant" id="VAR_018410" description="In dbSNP:rs448012." evidence="9 12 39 43">
    <original>H</original>
    <variation>Q</variation>
    <location>
        <position position="890"/>
    </location>
</feature>
<feature type="sequence variant" id="VAR_018411" description="In HCI; dbSNP:rs34255532." evidence="9">
    <original>P</original>
    <variation>S</variation>
    <location>
        <position position="954"/>
    </location>
</feature>
<feature type="sequence variant" id="VAR_083811" description="In CHTD7." evidence="35">
    <location>
        <begin position="999"/>
        <end position="1363"/>
    </location>
</feature>
<feature type="sequence variant" id="VAR_042065" description="In a metastatic melanoma sample; somatic mutation." evidence="22">
    <original>T</original>
    <variation>I</variation>
    <location>
        <position position="1010"/>
    </location>
</feature>
<feature type="sequence variant" id="VAR_074046" description="In LMPHM1." evidence="23">
    <original>Q</original>
    <variation>L</variation>
    <location>
        <position position="1020"/>
    </location>
</feature>
<feature type="sequence variant" id="VAR_042066" description="In dbSNP:rs56082504." evidence="22">
    <original>R</original>
    <variation>Q</variation>
    <location>
        <position position="1031"/>
    </location>
</feature>
<feature type="sequence variant" id="VAR_074047" description="Found in sporadic congenital lymphedema; uncertain significance." evidence="20">
    <original>H</original>
    <variation>Q</variation>
    <location>
        <position position="1035"/>
    </location>
</feature>
<feature type="sequence variant" id="VAR_018412" description="In LMPHM1; loss of kinase activity; dbSNP:rs121909653." evidence="7">
    <original>H</original>
    <variation>R</variation>
    <location>
        <position position="1035"/>
    </location>
</feature>
<feature type="sequence variant" id="VAR_018413" description="In LMPHM1; loss of kinase activity; dbSNP:rs121909650." evidence="6 10">
    <original>R</original>
    <variation>P</variation>
    <location>
        <position position="1041"/>
    </location>
</feature>
<feature type="sequence variant" id="VAR_018414" description="In LMPHM1; loss of kinase activity; dbSNP:rs121909651." evidence="6">
    <original>L</original>
    <variation>P</variation>
    <location>
        <position position="1044"/>
    </location>
</feature>
<feature type="sequence variant" id="VAR_042067" description="In dbSNP:rs56310180." evidence="22">
    <original>D</original>
    <variation>N</variation>
    <location>
        <position position="1049"/>
    </location>
</feature>
<feature type="sequence variant" id="VAR_042068" description="In dbSNP:rs1400220848." evidence="22">
    <original>R</original>
    <variation>Q</variation>
    <location>
        <position position="1075"/>
    </location>
</feature>
<feature type="sequence variant" id="VAR_074048" description="In LMPHM1; dbSNP:rs121909655." evidence="20">
    <original>I</original>
    <variation>T</variation>
    <location>
        <position position="1086"/>
    </location>
</feature>
<feature type="sequence variant" id="VAR_074049" description="In LMPHM1; dbSNP:rs121909656." evidence="19">
    <original>E</original>
    <variation>K</variation>
    <location>
        <position position="1106"/>
    </location>
</feature>
<feature type="sequence variant" id="VAR_074050" description="In LMPHM1." evidence="20">
    <location>
        <position position="1108"/>
    </location>
</feature>
<feature type="sequence variant" id="VAR_018415" description="In LMPHM1; loss of kinase activity; dbSNP:rs121909652." evidence="6 42">
    <original>P</original>
    <variation>L</variation>
    <location>
        <position position="1114"/>
    </location>
</feature>
<feature type="sequence variant" id="VAR_018416" description="In HCI." evidence="9">
    <original>P</original>
    <variation>S</variation>
    <location>
        <position position="1137"/>
    </location>
</feature>
<feature type="sequence variant" id="VAR_018417" description="In dbSNP:rs1130379." evidence="9 22 39 43">
    <original>R</original>
    <variation>H</variation>
    <location>
        <position position="1146"/>
    </location>
</feature>
<feature type="sequence variant" id="VAR_083812" description="In CHTD7; uncertain significance; dbSNP:rs2127794094." evidence="36">
    <original>L</original>
    <variation>V</variation>
    <location>
        <position position="1173"/>
    </location>
</feature>
<feature type="sequence variant" id="VAR_083813" description="In CHTD7." evidence="36">
    <location>
        <begin position="1192"/>
        <end position="1363"/>
    </location>
</feature>
<feature type="sequence variant" id="VAR_074051" description="In LMPHM1; recessive form." evidence="34">
    <original>S</original>
    <variation>C</variation>
    <location>
        <position position="1235"/>
    </location>
</feature>
<feature type="mutagenesis site" description="Decreases autophosphorylation on tyrosine residues upon ligand binding; when associated with A-516. Abolishes autophosphorylation on tyrosine residues upon ligand binding; when associated with A-516 and A-737." evidence="33">
    <original>T</original>
    <variation>E</variation>
    <location>
        <position position="446"/>
    </location>
</feature>
<feature type="mutagenesis site" description="Decreases autophosphorylation on tyrosine residues upon ligand binding; when associated with E-446. Abolishes autophosphorylation on tyrosine residues upon ligand binding; when associated with E-446 and A-737." evidence="33">
    <original>K</original>
    <variation>A</variation>
    <location>
        <position position="516"/>
    </location>
</feature>
<feature type="mutagenesis site" description="Decreases autophosphorylation on tyrosine residues upon ligand binding. Abolishes autophosphorylation on tyrosine residues upon ligand binding; when associated with E-446 and A-516." evidence="33">
    <original>R</original>
    <variation>A</variation>
    <location>
        <position position="737"/>
    </location>
</feature>
<feature type="mutagenesis site" description="Abolishes enzyme activity." evidence="10">
    <original>K</original>
    <variation>G</variation>
    <location>
        <position position="879"/>
    </location>
</feature>
<feature type="mutagenesis site" description="Loss of phosphorylation site. No effect on stimulation of cell proliferation and cell migration." evidence="16 29">
    <original>Y</original>
    <variation>F</variation>
    <location>
        <position position="1063"/>
    </location>
</feature>
<feature type="mutagenesis site" description="Global loss of autophosphorylation. Abolishes stimulation of cell proliferation and cell migration." evidence="16 29">
    <original>Y</original>
    <variation>F</variation>
    <location>
        <position position="1068"/>
    </location>
</feature>
<feature type="mutagenesis site" description="Loss of phosphorylation site. Strongly reduces stimulation of cell proliferation and cell migration." evidence="10 16">
    <original>Y</original>
    <variation>F</variation>
    <location>
        <position position="1230"/>
    </location>
</feature>
<feature type="mutagenesis site" description="Loss of phosphorylation site. Strongly reduces stimulation of cell proliferation and cell migration." evidence="10 16">
    <original>Y</original>
    <variation>F</variation>
    <location>
        <position position="1231"/>
    </location>
</feature>
<feature type="mutagenesis site" description="Loss of phosphorylation site. No effect on stimulation of cell proliferation and cell migration." evidence="10">
    <original>Y</original>
    <variation>F</variation>
    <location>
        <position position="1265"/>
    </location>
</feature>
<feature type="mutagenesis site" description="Loss of phosphorylation site. Reduced autophosphorylation." evidence="10 37">
    <original>Y</original>
    <variation>F</variation>
    <location>
        <position position="1333"/>
    </location>
</feature>
<feature type="mutagenesis site" description="Reduced autophosphorylation. Strongly reduces stimulation of cell proliferation and cell migration." evidence="10 29 37">
    <original>Y</original>
    <variation>F</variation>
    <location>
        <position position="1337"/>
    </location>
</feature>
<feature type="mutagenesis site" description="Loss of phosphorylation site. Slightly reduced autophosphorylation." evidence="10 37">
    <original>Y</original>
    <variation>F</variation>
    <location>
        <position position="1363"/>
    </location>
</feature>
<feature type="sequence conflict" description="In Ref. 3; CAA49505 and 7; AAO89504/AAO89505." evidence="51" ref="3 7">
    <original>G</original>
    <variation>D</variation>
    <location>
        <position position="24"/>
    </location>
</feature>
<feature type="sequence conflict" description="In Ref. 8; BAF84368." evidence="51" ref="8">
    <original>N</original>
    <variation>D</variation>
    <location>
        <position position="538"/>
    </location>
</feature>
<feature type="sequence conflict" description="In Ref. 3; CAA49505 and 7; AAO89504/AAO89505." evidence="51" ref="3 7">
    <original>R</original>
    <variation>P</variation>
    <location>
        <position position="745"/>
    </location>
</feature>
<feature type="sequence conflict" description="In Ref. 3; CAA49505 and 7; AAO89504/AAO89505." evidence="51" ref="3 7">
    <original>NA</original>
    <variation>RP</variation>
    <location>
        <begin position="752"/>
        <end position="753"/>
    </location>
</feature>
<feature type="sequence conflict" description="In Ref. 3; CAA49505 and 7; AAO89504/AAO89505." evidence="51" ref="3 7">
    <original>L</original>
    <variation>V</variation>
    <location>
        <position position="1128"/>
    </location>
</feature>
<feature type="sequence conflict" description="In Ref. 3; CAA49505." evidence="51" ref="3">
    <original>E</original>
    <variation>D</variation>
    <location>
        <position position="1164"/>
    </location>
</feature>
<feature type="strand" evidence="53">
    <location>
        <begin position="332"/>
        <end position="339"/>
    </location>
</feature>
<feature type="strand" evidence="53">
    <location>
        <begin position="341"/>
        <end position="346"/>
    </location>
</feature>
<feature type="strand" evidence="53">
    <location>
        <begin position="350"/>
        <end position="362"/>
    </location>
</feature>
<feature type="strand" evidence="53">
    <location>
        <begin position="365"/>
        <end position="370"/>
    </location>
</feature>
<feature type="strand" evidence="53">
    <location>
        <begin position="381"/>
        <end position="388"/>
    </location>
</feature>
<feature type="helix" evidence="53">
    <location>
        <begin position="391"/>
        <end position="393"/>
    </location>
</feature>
<feature type="strand" evidence="53">
    <location>
        <begin position="395"/>
        <end position="403"/>
    </location>
</feature>
<feature type="turn" evidence="53">
    <location>
        <begin position="404"/>
        <end position="407"/>
    </location>
</feature>
<feature type="strand" evidence="53">
    <location>
        <begin position="408"/>
        <end position="424"/>
    </location>
</feature>
<feature type="helix" evidence="53">
    <location>
        <begin position="425"/>
        <end position="428"/>
    </location>
</feature>
<feature type="strand" evidence="53">
    <location>
        <begin position="441"/>
        <end position="451"/>
    </location>
</feature>
<feature type="strand" evidence="53">
    <location>
        <begin position="457"/>
        <end position="464"/>
    </location>
</feature>
<feature type="strand" evidence="53">
    <location>
        <begin position="501"/>
        <end position="511"/>
    </location>
</feature>
<feature type="strand" evidence="53">
    <location>
        <begin position="514"/>
        <end position="524"/>
    </location>
</feature>
<feature type="strand" evidence="53">
    <location>
        <begin position="530"/>
        <end position="538"/>
    </location>
</feature>
<feature type="strand" evidence="53">
    <location>
        <begin position="541"/>
        <end position="549"/>
    </location>
</feature>
<name>VGFR3_HUMAN</name>
<gene>
    <name type="primary">FLT4</name>
    <name type="synonym">VEGFR3</name>
</gene>
<comment type="function">
    <text evidence="8 13 15 16 18 21 26 27 28 29 30 32 37 40 41">Tyrosine-protein kinase that acts as a cell-surface receptor for VEGFC and VEGFD, and plays an essential role in adult lymphangiogenesis and in the development of the vascular network and the cardiovascular system during embryonic development. Promotes proliferation, survival and migration of endothelial cells, and regulates angiogenic sprouting. Signaling by activated FLT4 leads to enhanced production of VEGFC, and to a lesser degree VEGFA, thereby creating a positive feedback loop that enhances FLT4 signaling. Modulates KDR signaling by forming heterodimers. The secreted isoform 3 may function as a decoy receptor for VEGFC and/or VEGFD and play an important role as a negative regulator of VEGFC-mediated lymphangiogenesis and angiogenesis. Binding of vascular growth factors to isoform 1 or isoform 2 leads to the activation of several signaling cascades; isoform 2 seems to be less efficient in signal transduction, because it has a truncated C-terminus and therefore lacks several phosphorylation sites. Mediates activation of the MAPK1/ERK2, MAPK3/ERK1 signaling pathway, of MAPK8 and the JUN signaling pathway, and of the AKT1 signaling pathway. Phosphorylates SHC1. Mediates phosphorylation of PIK3R1, the regulatory subunit of phosphatidylinositol 3-kinase. Promotes phosphorylation of MAPK8 at 'Thr-183' and 'Tyr-185', and of AKT1 at 'Ser-473'.</text>
</comment>
<comment type="catalytic activity">
    <reaction evidence="4 10 38">
        <text>L-tyrosyl-[protein] + ATP = O-phospho-L-tyrosyl-[protein] + ADP + H(+)</text>
        <dbReference type="Rhea" id="RHEA:10596"/>
        <dbReference type="Rhea" id="RHEA-COMP:10136"/>
        <dbReference type="Rhea" id="RHEA-COMP:20101"/>
        <dbReference type="ChEBI" id="CHEBI:15378"/>
        <dbReference type="ChEBI" id="CHEBI:30616"/>
        <dbReference type="ChEBI" id="CHEBI:46858"/>
        <dbReference type="ChEBI" id="CHEBI:61978"/>
        <dbReference type="ChEBI" id="CHEBI:456216"/>
        <dbReference type="EC" id="2.7.10.1"/>
    </reaction>
</comment>
<comment type="activity regulation">
    <text evidence="13 27 29">Present in an inactive conformation in the absence of bound ligand. Binding of VEGFC or VEGFD leads to dimerization and activation by autophosphorylation on tyrosine residues. Inhibited by MAZ51.</text>
</comment>
<comment type="subunit">
    <text evidence="10 13 15 16 18 24 26 28 29 31 33 37 40 41">Interacts with VEGFC and VEGFD. Monomer in the absence of bound VEGFC or VEGFD. Homodimer in the presence of bound VEGFC or VEGFD. Can also form a heterodimer with KDR. Interacts with PTPN14; the interaction is enhanced by stimulation with VEGFC. Interacts with CRK, GRB2, PTK2/FAK1, SHC1, PIK3R1 and PTPN11/SHP-2. Identified in a complex with SRC and ITGB1.</text>
</comment>
<comment type="interaction">
    <interactant intactId="EBI-1005467">
        <id>P35916</id>
    </interactant>
    <interactant intactId="EBI-352572">
        <id>P08238</id>
        <label>HSP90AB1</label>
    </interactant>
    <organismsDiffer>false</organismsDiffer>
    <experiments>3</experiments>
</comment>
<comment type="interaction">
    <interactant intactId="EBI-1005467">
        <id>P35916</id>
    </interactant>
    <interactant intactId="EBI-1005487">
        <id>P35968</id>
        <label>KDR</label>
    </interactant>
    <organismsDiffer>false</organismsDiffer>
    <experiments>5</experiments>
</comment>
<comment type="interaction">
    <interactant intactId="EBI-1005467">
        <id>P35916</id>
    </interactant>
    <interactant intactId="EBI-3405539">
        <id>P49767</id>
        <label>VEGFC</label>
    </interactant>
    <organismsDiffer>false</organismsDiffer>
    <experiments>2</experiments>
</comment>
<comment type="subcellular location">
    <subcellularLocation>
        <location evidence="30 38">Cell membrane</location>
        <topology>Single-pass type I membrane protein</topology>
    </subcellularLocation>
    <subcellularLocation>
        <location evidence="18 30">Cytoplasm</location>
    </subcellularLocation>
    <subcellularLocation>
        <location evidence="18">Nucleus</location>
    </subcellularLocation>
    <text evidence="30">Ligand-mediated autophosphorylation leads to rapid internalization.</text>
</comment>
<comment type="subcellular location">
    <molecule>Isoform 1</molecule>
    <subcellularLocation>
        <location>Cell membrane</location>
        <topology>Single-pass type I membrane protein</topology>
    </subcellularLocation>
    <text>Ligand-mediated autophosphorylation leads to rapid internalization.</text>
</comment>
<comment type="subcellular location">
    <molecule>Isoform 2</molecule>
    <subcellularLocation>
        <location>Cell membrane</location>
        <topology>Single-pass type I membrane protein</topology>
    </subcellularLocation>
</comment>
<comment type="subcellular location">
    <molecule>Isoform 3</molecule>
    <subcellularLocation>
        <location>Secreted</location>
    </subcellularLocation>
    <subcellularLocation>
        <location>Cytoplasm</location>
    </subcellularLocation>
</comment>
<comment type="alternative products">
    <event type="alternative splicing"/>
    <isoform>
        <id>P35916-2</id>
        <name>1</name>
        <name>Long</name>
        <sequence type="displayed"/>
    </isoform>
    <isoform>
        <id>P35916-1</id>
        <name>2</name>
        <name>Short</name>
        <sequence type="described" ref="VSP_041995"/>
    </isoform>
    <isoform>
        <id>P35916-3</id>
        <name>3</name>
        <name>sVegfr3</name>
        <sequence type="described" ref="VSP_041993 VSP_041994"/>
    </isoform>
</comment>
<comment type="tissue specificity">
    <text evidence="11 28 37">Detected in endothelial cells (at protein level). Widely expressed. Detected in fetal spleen, lung and brain. Detected in adult liver, muscle, thymus, placenta, lung, testis, ovary, prostate, heart, and kidney.</text>
</comment>
<comment type="domain">
    <text evidence="33">The first and second Ig-like C2-type (immunoglobulin-like) domains are sufficient for VEGFC binding (PubMed:23878260). The fourth and fifth Ig-like C2-type domains are sufficient for homodimerization (PubMed:23878260). The fifth and seventh Ig-like C2-type domains are required for autophosphorylation and further activation (PubMed:23878260).</text>
</comment>
<comment type="PTM">
    <text evidence="10 13 15 16 29 33 40">Autophosphorylated on tyrosine residues upon ligand binding. Autophosphorylation occurs in trans, i.e. one subunit of the dimeric receptor phosphorylates tyrosine residues on the other subunit. Phosphorylation in response to H(2)O(2) is mediated by a process that requires SRC and PRKCD activity. Phosphorylation at Tyr-1068 is required for autophosphorylation at additional tyrosine residues. Phosphorylation at Tyr-1063 and Tyr-1337 is important for interaction with CRK and subsequent activation of MAPK8. Phosphorylation at Tyr-1230, Tyr-1231 and Tyr-1337 is important for interaction with GRB2 and subsequent activation of the AKT1 and MAPK1/ERK2 and/or MAPK3/ERK1 signaling pathways. In response to endothelial cell adhesion onto collagen, can also be phosphorylated in the absence of FLT4 kinase activity by SRC at Tyr-830, Tyr-833, Tyr-853, Tyr-1063, Tyr-1333, and Tyr-1337.</text>
</comment>
<comment type="disease" evidence="6 7 10 13 19 20 23 25 34 42">
    <disease id="DI-00692">
        <name>Lymphatic malformation 1</name>
        <acronym>LMPHM1</acronym>
        <description>A form of primary lymphedema, a disease characterized by swelling of body parts due to developmental anomalies and functional defects of the lymphatic system. Patients with lymphedema may suffer from recurrent local infections. LMPHM1 is an autosomal dominant form with variable expression and severity. Onset is usually at birth or in early childhood but can occur later. Affected individuals manifest lymphedema, predominantly in the lower limbs, and hypoplasia of lymphatic vessels. Additional features are hemangioma and nail dysplasia or papillomatosis.</description>
        <dbReference type="MIM" id="153100"/>
    </disease>
    <text>The disease is caused by variants affecting the gene represented in this entry.</text>
</comment>
<comment type="disease" evidence="9">
    <disease id="DI-02546">
        <name>Hemangioma, capillary infantile</name>
        <acronym>HCI</acronym>
        <description>A condition characterized by dull red, firm, dome-shaped hemangiomas, sharply demarcated from surrounding skin, usually presenting at birth or occurring within the first two or three months of life. They result from highly proliferative, localized growth of capillary endothelium and generally undergo regression and involution without scarring.</description>
        <dbReference type="MIM" id="602089"/>
    </disease>
    <text>Disease susceptibility is associated with variants affecting the gene represented in this entry.</text>
</comment>
<comment type="disease">
    <text>Plays an important role in tumor lymphangiogenesis, in cancer cell survival, migration, and formation of metastases.</text>
</comment>
<comment type="disease" evidence="35 36">
    <disease id="DI-05764">
        <name>Congenital heart defects, multiple types, 7</name>
        <acronym>CHTD7</acronym>
        <description>An autosomal dominant disorder with incomplete penetrance characterized by congenital developmental abnormalities involving structures of the heart. Common defects include tetralogy of Fallot, pulmonary stenosis or atresia, absent pulmonary valve, right aortic arch, double aortic arch, and major aortopulmonary collateral arteries.</description>
        <dbReference type="MIM" id="618780"/>
    </disease>
    <text>The disease is caused by variants affecting the gene represented in this entry.</text>
</comment>
<comment type="similarity">
    <text evidence="3">Belongs to the protein kinase superfamily. Tyr protein kinase family. CSF-1/PDGF receptor subfamily.</text>
</comment>
<comment type="sequence caution" evidence="51">
    <conflict type="erroneous initiation">
        <sequence resource="EMBL-CDS" id="CAA48290"/>
    </conflict>
    <text>Extended N-terminus.</text>
</comment>
<comment type="online information" name="Wikipedia">
    <link uri="https://en.wikipedia.org/wiki/FLT4"/>
    <text>FLT4 entry</text>
</comment>
<protein>
    <recommendedName>
        <fullName>Vascular endothelial growth factor receptor 3</fullName>
        <shortName>VEGFR-3</shortName>
        <ecNumber>2.7.10.1</ecNumber>
    </recommendedName>
    <alternativeName>
        <fullName>Fms-like tyrosine kinase 4</fullName>
        <shortName>FLT-4</shortName>
    </alternativeName>
    <alternativeName>
        <fullName>Tyrosine-protein kinase receptor FLT4</fullName>
    </alternativeName>
</protein>
<evidence type="ECO:0000255" key="1"/>
<evidence type="ECO:0000255" key="2">
    <source>
        <dbReference type="PROSITE-ProRule" id="PRU00114"/>
    </source>
</evidence>
<evidence type="ECO:0000255" key="3">
    <source>
        <dbReference type="PROSITE-ProRule" id="PRU00159"/>
    </source>
</evidence>
<evidence type="ECO:0000255" key="4">
    <source>
        <dbReference type="PROSITE-ProRule" id="PRU10028"/>
    </source>
</evidence>
<evidence type="ECO:0000256" key="5">
    <source>
        <dbReference type="SAM" id="MobiDB-lite"/>
    </source>
</evidence>
<evidence type="ECO:0000269" key="6">
    <source>
    </source>
</evidence>
<evidence type="ECO:0000269" key="7">
    <source>
    </source>
</evidence>
<evidence type="ECO:0000269" key="8">
    <source>
    </source>
</evidence>
<evidence type="ECO:0000269" key="9">
    <source>
    </source>
</evidence>
<evidence type="ECO:0000269" key="10">
    <source>
    </source>
</evidence>
<evidence type="ECO:0000269" key="11">
    <source>
    </source>
</evidence>
<evidence type="ECO:0000269" key="12">
    <source>
    </source>
</evidence>
<evidence type="ECO:0000269" key="13">
    <source>
    </source>
</evidence>
<evidence type="ECO:0000269" key="14">
    <source>
    </source>
</evidence>
<evidence type="ECO:0000269" key="15">
    <source>
    </source>
</evidence>
<evidence type="ECO:0000269" key="16">
    <source>
    </source>
</evidence>
<evidence type="ECO:0000269" key="17">
    <source>
    </source>
</evidence>
<evidence type="ECO:0000269" key="18">
    <source>
    </source>
</evidence>
<evidence type="ECO:0000269" key="19">
    <source>
    </source>
</evidence>
<evidence type="ECO:0000269" key="20">
    <source>
    </source>
</evidence>
<evidence type="ECO:0000269" key="21">
    <source>
    </source>
</evidence>
<evidence type="ECO:0000269" key="22">
    <source>
    </source>
</evidence>
<evidence type="ECO:0000269" key="23">
    <source>
    </source>
</evidence>
<evidence type="ECO:0000269" key="24">
    <source>
    </source>
</evidence>
<evidence type="ECO:0000269" key="25">
    <source>
    </source>
</evidence>
<evidence type="ECO:0000269" key="26">
    <source>
    </source>
</evidence>
<evidence type="ECO:0000269" key="27">
    <source>
    </source>
</evidence>
<evidence type="ECO:0000269" key="28">
    <source>
    </source>
</evidence>
<evidence type="ECO:0000269" key="29">
    <source>
    </source>
</evidence>
<evidence type="ECO:0000269" key="30">
    <source>
    </source>
</evidence>
<evidence type="ECO:0000269" key="31">
    <source>
    </source>
</evidence>
<evidence type="ECO:0000269" key="32">
    <source>
    </source>
</evidence>
<evidence type="ECO:0000269" key="33">
    <source>
    </source>
</evidence>
<evidence type="ECO:0000269" key="34">
    <source>
    </source>
</evidence>
<evidence type="ECO:0000269" key="35">
    <source>
    </source>
</evidence>
<evidence type="ECO:0000269" key="36">
    <source>
    </source>
</evidence>
<evidence type="ECO:0000269" key="37">
    <source>
    </source>
</evidence>
<evidence type="ECO:0000269" key="38">
    <source>
    </source>
</evidence>
<evidence type="ECO:0000269" key="39">
    <source>
    </source>
</evidence>
<evidence type="ECO:0000269" key="40">
    <source>
    </source>
</evidence>
<evidence type="ECO:0000269" key="41">
    <source>
    </source>
</evidence>
<evidence type="ECO:0000269" key="42">
    <source>
    </source>
</evidence>
<evidence type="ECO:0000269" key="43">
    <source ref="7"/>
</evidence>
<evidence type="ECO:0000303" key="44">
    <source>
    </source>
</evidence>
<evidence type="ECO:0000303" key="45">
    <source>
    </source>
</evidence>
<evidence type="ECO:0000303" key="46">
    <source>
    </source>
</evidence>
<evidence type="ECO:0000303" key="47">
    <source>
    </source>
</evidence>
<evidence type="ECO:0000303" key="48">
    <source>
    </source>
</evidence>
<evidence type="ECO:0000303" key="49">
    <source>
    </source>
</evidence>
<evidence type="ECO:0000303" key="50">
    <source ref="7"/>
</evidence>
<evidence type="ECO:0000305" key="51"/>
<evidence type="ECO:0007744" key="52">
    <source>
        <dbReference type="PDB" id="4BSK"/>
    </source>
</evidence>
<evidence type="ECO:0007829" key="53">
    <source>
        <dbReference type="PDB" id="4BSJ"/>
    </source>
</evidence>
<sequence>MQRGAALCLRLWLCLGLLDGLVSGYSMTPPTLNITEESHVIDTGDSLSISCRGQHPLEWAWPGAQEAPATGDKDSEDTGVVRDCEGTDARPYCKVLLLHEVHANDTGSYVCYYKYIKARIEGTTAASSYVFVRDFEQPFINKPDTLLVNRKDAMWVPCLVSIPGLNVTLRSQSSVLWPDGQEVVWDDRRGMLVSTPLLHDALYLQCETTWGDQDFLSNPFLVHITGNELYDIQLLPRKSLELLVGEKLVLNCTVWAEFNSGVTFDWDYPGKQAERGKWVPERRSQQTHTELSSILTIHNVSQHDLGSYVCKANNGIQRFRESTEVIVHENPFISVEWLKGPILEATAGDELVKLPVKLAAYPPPEFQWYKDGKALSGRHSPHALVLKEVTEASTGTYTLALWNSAAGLRRNISLELVVNVPPQIHEKEASSPSIYSRHSRQALTCTAYGVPLPLSIQWHWRPWTPCKMFAQRSLRRRQQQDLMPQCRDWRAVTTQDAVNPIESLDTWTEFVEGKNKTVSKLVIQNANVSAMYKCVVSNKVGQDERLIYFYVTTIPDGFTIESKPSEELLEGQPVLLSCQADSYKYEHLRWYRLNLSTLHDAHGNPLLLDCKNVHLFATPLAASLEEVAPGARHATLSLSIPRVAPEHEGHYVCEVQDRRSHDKHCHKKYLSVQALEAPRLTQNLTDLLVNVSDSLEMQCLVAGAHAPSIVWYKDERLLEEKSGVDLADSNQKLSIQRVREEDAGRYLCSVCNAKGCVNSSASVAVEGSEDKGSMEIVILVGTGVIAVFFWVLLLLIFCNMRRPAHADIKTGYLSIIMDPGEVPLEEQCEYLSYDASQWEFPRERLHLGRVLGYGAFGKVVEASAFGIHKGSSCDTVAVKMLKEGATASEHRALMSELKILIHIGNHLNVVNLLGACTKPQGPLMVIVEFCKYGNLSNFLRAKRDAFSPCAEKSPEQRGRFRAMVELARLDRRRPGSSDRVLFARFSKTEGGARRASPDQEAEDLWLSPLTMEDLVCYSFQVARGMEFLASRKCIHRDLAARNILLSESDVVKICDFGLARDIYKDPDYVRKGSARLPLKWMAPESIFDKVYTTQSDVWSFGVLLWEIFSLGASPYPGVQINEEFCQRLRDGTRMRAPELATPAIRRIMLNCWSGDPKARPAFSELVEILGDLLQGRGLQEEEEVCMAPRSSQSSEEGSFSQVSTMALHIAQADAEDSPPSLQRHSLAARYYNWVSFPGCLARGAETRGSSRMKTFEEFPMTPTTYKGSVDNQTDSGMVLASEEFEQIESRHRQESGFSCKGPGQNVAVTRAHPDSQGRRRRPERGARGGQVFYNSEYGELSEPSEEDHCSPSARVTFFTDNSY</sequence>
<dbReference type="EC" id="2.7.10.1"/>
<dbReference type="EMBL" id="X69878">
    <property type="protein sequence ID" value="CAA49505.1"/>
    <property type="molecule type" value="mRNA"/>
</dbReference>
<dbReference type="EMBL" id="U43143">
    <property type="protein sequence ID" value="AAA85215.1"/>
    <property type="molecule type" value="mRNA"/>
</dbReference>
<dbReference type="EMBL" id="EU826564">
    <property type="protein sequence ID" value="ACF47600.1"/>
    <property type="molecule type" value="mRNA"/>
</dbReference>
<dbReference type="EMBL" id="AY233382">
    <property type="protein sequence ID" value="AAO89504.1"/>
    <property type="molecule type" value="mRNA"/>
</dbReference>
<dbReference type="EMBL" id="AY233383">
    <property type="protein sequence ID" value="AAO89505.1"/>
    <property type="molecule type" value="mRNA"/>
</dbReference>
<dbReference type="EMBL" id="AK291679">
    <property type="protein sequence ID" value="BAF84368.1"/>
    <property type="molecule type" value="mRNA"/>
</dbReference>
<dbReference type="EMBL" id="AC122714">
    <property type="status" value="NOT_ANNOTATED_CDS"/>
    <property type="molecule type" value="Genomic_DNA"/>
</dbReference>
<dbReference type="EMBL" id="X68203">
    <property type="protein sequence ID" value="CAA48290.1"/>
    <property type="status" value="ALT_INIT"/>
    <property type="molecule type" value="mRNA"/>
</dbReference>
<dbReference type="EMBL" id="S66407">
    <property type="protein sequence ID" value="AAB28539.1"/>
    <property type="molecule type" value="mRNA"/>
</dbReference>
<dbReference type="CCDS" id="CCDS43412.1">
    <molecule id="P35916-1"/>
</dbReference>
<dbReference type="CCDS" id="CCDS4457.1">
    <molecule id="P35916-2"/>
</dbReference>
<dbReference type="PIR" id="A48999">
    <property type="entry name" value="A48999"/>
</dbReference>
<dbReference type="RefSeq" id="NP_002011.2">
    <molecule id="P35916-1"/>
    <property type="nucleotide sequence ID" value="NM_002020.5"/>
</dbReference>
<dbReference type="RefSeq" id="NP_891555.2">
    <molecule id="P35916-2"/>
    <property type="nucleotide sequence ID" value="NM_182925.5"/>
</dbReference>
<dbReference type="PDB" id="4BSJ">
    <property type="method" value="X-ray"/>
    <property type="resolution" value="2.50 A"/>
    <property type="chains" value="A=330-553"/>
</dbReference>
<dbReference type="PDB" id="4BSK">
    <property type="method" value="X-ray"/>
    <property type="resolution" value="4.20 A"/>
    <property type="chains" value="A=23-229"/>
</dbReference>
<dbReference type="PDBsum" id="4BSJ"/>
<dbReference type="PDBsum" id="4BSK"/>
<dbReference type="SMR" id="P35916"/>
<dbReference type="BioGRID" id="108612">
    <property type="interactions" value="251"/>
</dbReference>
<dbReference type="CORUM" id="P35916"/>
<dbReference type="DIP" id="DIP-5739N"/>
<dbReference type="FunCoup" id="P35916">
    <property type="interactions" value="1900"/>
</dbReference>
<dbReference type="IntAct" id="P35916">
    <property type="interactions" value="239"/>
</dbReference>
<dbReference type="MINT" id="P35916"/>
<dbReference type="STRING" id="9606.ENSP00000261937"/>
<dbReference type="BindingDB" id="P35916"/>
<dbReference type="ChEMBL" id="CHEMBL1955"/>
<dbReference type="DrugBank" id="DB06626">
    <property type="generic name" value="Axitinib"/>
</dbReference>
<dbReference type="DrugBank" id="DB05932">
    <property type="generic name" value="Denibulin"/>
</dbReference>
<dbReference type="DrugBank" id="DB11741">
    <property type="generic name" value="Famitinib"/>
</dbReference>
<dbReference type="DrugBank" id="DB12010">
    <property type="generic name" value="Fostamatinib"/>
</dbReference>
<dbReference type="DrugBank" id="DB11679">
    <property type="generic name" value="Fruquintinib"/>
</dbReference>
<dbReference type="DrugBank" id="DB06101">
    <property type="generic name" value="IMC-1C11"/>
</dbReference>
<dbReference type="DrugBank" id="DB09078">
    <property type="generic name" value="Lenvatinib"/>
</dbReference>
<dbReference type="DrugBank" id="DB06080">
    <property type="generic name" value="Linifanib"/>
</dbReference>
<dbReference type="DrugBank" id="DB11845">
    <property type="generic name" value="Lucitanib"/>
</dbReference>
<dbReference type="DrugBank" id="DB09079">
    <property type="generic name" value="Nintedanib"/>
</dbReference>
<dbReference type="DrugBank" id="DB06589">
    <property type="generic name" value="Pazopanib"/>
</dbReference>
<dbReference type="DrugBank" id="DB08896">
    <property type="generic name" value="Regorafenib"/>
</dbReference>
<dbReference type="DrugBank" id="DB15685">
    <property type="generic name" value="Selpercatinib"/>
</dbReference>
<dbReference type="DrugBank" id="DB15036">
    <property type="generic name" value="Sitravatinib"/>
</dbReference>
<dbReference type="DrugBank" id="DB00398">
    <property type="generic name" value="Sorafenib"/>
</dbReference>
<dbReference type="DrugBank" id="DB01268">
    <property type="generic name" value="Sunitinib"/>
</dbReference>
<dbReference type="DrugBank" id="DB15106">
    <property type="generic name" value="Surufatinib"/>
</dbReference>
<dbReference type="DrugBank" id="DB05075">
    <property type="generic name" value="TG-100801"/>
</dbReference>
<dbReference type="DrugBank" id="DB11800">
    <property type="generic name" value="Tivozanib"/>
</dbReference>
<dbReference type="DrugBank" id="DB04879">
    <property type="generic name" value="Vatalanib"/>
</dbReference>
<dbReference type="DrugCentral" id="P35916"/>
<dbReference type="GuidetoPHARMACOLOGY" id="1814"/>
<dbReference type="TCDB" id="8.A.23.1.43">
    <property type="family name" value="the basigin (basigin) family"/>
</dbReference>
<dbReference type="GlyCosmos" id="P35916">
    <property type="glycosylation" value="12 sites, No reported glycans"/>
</dbReference>
<dbReference type="GlyGen" id="P35916">
    <property type="glycosylation" value="15 sites, 5 N-linked glycans (5 sites)"/>
</dbReference>
<dbReference type="iPTMnet" id="P35916"/>
<dbReference type="PhosphoSitePlus" id="P35916"/>
<dbReference type="BioMuta" id="FLT4"/>
<dbReference type="DMDM" id="357529070"/>
<dbReference type="jPOST" id="P35916"/>
<dbReference type="MassIVE" id="P35916"/>
<dbReference type="PaxDb" id="9606-ENSP00000261937"/>
<dbReference type="PeptideAtlas" id="P35916"/>
<dbReference type="ProteomicsDB" id="55166">
    <molecule id="P35916-2"/>
</dbReference>
<dbReference type="ProteomicsDB" id="55167">
    <molecule id="P35916-1"/>
</dbReference>
<dbReference type="ProteomicsDB" id="55168">
    <molecule id="P35916-3"/>
</dbReference>
<dbReference type="ABCD" id="P35916">
    <property type="antibodies" value="5 sequenced antibodies"/>
</dbReference>
<dbReference type="Antibodypedia" id="3429">
    <property type="antibodies" value="1075 antibodies from 47 providers"/>
</dbReference>
<dbReference type="DNASU" id="2324"/>
<dbReference type="Ensembl" id="ENST00000261937.11">
    <molecule id="P35916-2"/>
    <property type="protein sequence ID" value="ENSP00000261937.6"/>
    <property type="gene ID" value="ENSG00000037280.16"/>
</dbReference>
<dbReference type="Ensembl" id="ENST00000393347.7">
    <molecule id="P35916-1"/>
    <property type="protein sequence ID" value="ENSP00000377016.3"/>
    <property type="gene ID" value="ENSG00000037280.16"/>
</dbReference>
<dbReference type="GeneID" id="2324"/>
<dbReference type="KEGG" id="hsa:2324"/>
<dbReference type="MANE-Select" id="ENST00000261937.11">
    <property type="protein sequence ID" value="ENSP00000261937.6"/>
    <property type="RefSeq nucleotide sequence ID" value="NM_182925.5"/>
    <property type="RefSeq protein sequence ID" value="NP_891555.2"/>
</dbReference>
<dbReference type="UCSC" id="uc003mlz.4">
    <molecule id="P35916-2"/>
    <property type="organism name" value="human"/>
</dbReference>
<dbReference type="AGR" id="HGNC:3767"/>
<dbReference type="CTD" id="2324"/>
<dbReference type="DisGeNET" id="2324"/>
<dbReference type="GeneCards" id="FLT4"/>
<dbReference type="GeneReviews" id="FLT4"/>
<dbReference type="HGNC" id="HGNC:3767">
    <property type="gene designation" value="FLT4"/>
</dbReference>
<dbReference type="HPA" id="ENSG00000037280">
    <property type="expression patterns" value="Low tissue specificity"/>
</dbReference>
<dbReference type="MalaCards" id="FLT4"/>
<dbReference type="MIM" id="136352">
    <property type="type" value="gene"/>
</dbReference>
<dbReference type="MIM" id="153100">
    <property type="type" value="phenotype"/>
</dbReference>
<dbReference type="MIM" id="602089">
    <property type="type" value="phenotype"/>
</dbReference>
<dbReference type="MIM" id="618780">
    <property type="type" value="phenotype"/>
</dbReference>
<dbReference type="neXtProt" id="NX_P35916"/>
<dbReference type="OpenTargets" id="ENSG00000037280"/>
<dbReference type="Orphanet" id="79452">
    <property type="disease" value="Milroy disease"/>
</dbReference>
<dbReference type="Orphanet" id="3303">
    <property type="disease" value="Tetralogy of Fallot"/>
</dbReference>
<dbReference type="PharmGKB" id="PA28183"/>
<dbReference type="VEuPathDB" id="HostDB:ENSG00000037280"/>
<dbReference type="eggNOG" id="KOG0200">
    <property type="taxonomic scope" value="Eukaryota"/>
</dbReference>
<dbReference type="GeneTree" id="ENSGT00940000159358"/>
<dbReference type="HOGENOM" id="CLU_000288_49_4_1"/>
<dbReference type="InParanoid" id="P35916"/>
<dbReference type="OMA" id="WDDRQGM"/>
<dbReference type="OrthoDB" id="9873386at2759"/>
<dbReference type="PAN-GO" id="P35916">
    <property type="GO annotations" value="7 GO annotations based on evolutionary models"/>
</dbReference>
<dbReference type="PhylomeDB" id="P35916"/>
<dbReference type="TreeFam" id="TF325768"/>
<dbReference type="BRENDA" id="2.7.10.1">
    <property type="organism ID" value="2681"/>
</dbReference>
<dbReference type="PathwayCommons" id="P35916"/>
<dbReference type="Reactome" id="R-HSA-195399">
    <property type="pathway name" value="VEGF binds to VEGFR leading to receptor dimerization"/>
</dbReference>
<dbReference type="Reactome" id="R-HSA-9013695">
    <property type="pathway name" value="NOTCH4 Intracellular Domain Regulates Transcription"/>
</dbReference>
<dbReference type="Reactome" id="R-HSA-9856530">
    <property type="pathway name" value="High laminar flow shear stress activates signaling by PIEZO1 and PECAM1:CDH5:KDR in endothelial cells"/>
</dbReference>
<dbReference type="SignaLink" id="P35916"/>
<dbReference type="SIGNOR" id="P35916"/>
<dbReference type="BioGRID-ORCS" id="2324">
    <property type="hits" value="12 hits in 1191 CRISPR screens"/>
</dbReference>
<dbReference type="ChiTaRS" id="FLT4">
    <property type="organism name" value="human"/>
</dbReference>
<dbReference type="EvolutionaryTrace" id="P35916"/>
<dbReference type="GeneWiki" id="FLT4"/>
<dbReference type="GenomeRNAi" id="2324"/>
<dbReference type="Pharos" id="P35916">
    <property type="development level" value="Tclin"/>
</dbReference>
<dbReference type="PRO" id="PR:P35916"/>
<dbReference type="Proteomes" id="UP000005640">
    <property type="component" value="Chromosome 5"/>
</dbReference>
<dbReference type="RNAct" id="P35916">
    <property type="molecule type" value="protein"/>
</dbReference>
<dbReference type="Bgee" id="ENSG00000037280">
    <property type="expression patterns" value="Expressed in right lobe of thyroid gland and 104 other cell types or tissues"/>
</dbReference>
<dbReference type="ExpressionAtlas" id="P35916">
    <property type="expression patterns" value="baseline and differential"/>
</dbReference>
<dbReference type="GO" id="GO:0005737">
    <property type="term" value="C:cytoplasm"/>
    <property type="evidence" value="ECO:0007669"/>
    <property type="project" value="UniProtKB-SubCell"/>
</dbReference>
<dbReference type="GO" id="GO:0005576">
    <property type="term" value="C:extracellular region"/>
    <property type="evidence" value="ECO:0007669"/>
    <property type="project" value="UniProtKB-SubCell"/>
</dbReference>
<dbReference type="GO" id="GO:0005634">
    <property type="term" value="C:nucleus"/>
    <property type="evidence" value="ECO:0007669"/>
    <property type="project" value="UniProtKB-SubCell"/>
</dbReference>
<dbReference type="GO" id="GO:0005886">
    <property type="term" value="C:plasma membrane"/>
    <property type="evidence" value="ECO:0000314"/>
    <property type="project" value="UniProtKB"/>
</dbReference>
<dbReference type="GO" id="GO:0043235">
    <property type="term" value="C:receptor complex"/>
    <property type="evidence" value="ECO:0000314"/>
    <property type="project" value="MGI"/>
</dbReference>
<dbReference type="GO" id="GO:0005524">
    <property type="term" value="F:ATP binding"/>
    <property type="evidence" value="ECO:0007669"/>
    <property type="project" value="UniProtKB-KW"/>
</dbReference>
<dbReference type="GO" id="GO:0019838">
    <property type="term" value="F:growth factor binding"/>
    <property type="evidence" value="ECO:0000353"/>
    <property type="project" value="UniProtKB"/>
</dbReference>
<dbReference type="GO" id="GO:0042803">
    <property type="term" value="F:protein homodimerization activity"/>
    <property type="evidence" value="ECO:0000314"/>
    <property type="project" value="UniProtKB"/>
</dbReference>
<dbReference type="GO" id="GO:0019903">
    <property type="term" value="F:protein phosphatase binding"/>
    <property type="evidence" value="ECO:0000353"/>
    <property type="project" value="UniProtKB"/>
</dbReference>
<dbReference type="GO" id="GO:0004714">
    <property type="term" value="F:transmembrane receptor protein tyrosine kinase activity"/>
    <property type="evidence" value="ECO:0000315"/>
    <property type="project" value="UniProtKB"/>
</dbReference>
<dbReference type="GO" id="GO:0005021">
    <property type="term" value="F:vascular endothelial growth factor receptor activity"/>
    <property type="evidence" value="ECO:0000314"/>
    <property type="project" value="UniProtKB"/>
</dbReference>
<dbReference type="GO" id="GO:0048514">
    <property type="term" value="P:blood vessel morphogenesis"/>
    <property type="evidence" value="ECO:0000250"/>
    <property type="project" value="UniProtKB"/>
</dbReference>
<dbReference type="GO" id="GO:0016477">
    <property type="term" value="P:cell migration"/>
    <property type="evidence" value="ECO:0000318"/>
    <property type="project" value="GO_Central"/>
</dbReference>
<dbReference type="GO" id="GO:0007169">
    <property type="term" value="P:cell surface receptor protein tyrosine kinase signaling pathway"/>
    <property type="evidence" value="ECO:0000304"/>
    <property type="project" value="ProtInc"/>
</dbReference>
<dbReference type="GO" id="GO:0035924">
    <property type="term" value="P:cellular response to vascular endothelial growth factor stimulus"/>
    <property type="evidence" value="ECO:0000314"/>
    <property type="project" value="UniProtKB"/>
</dbReference>
<dbReference type="GO" id="GO:0048286">
    <property type="term" value="P:lung alveolus development"/>
    <property type="evidence" value="ECO:0007669"/>
    <property type="project" value="Ensembl"/>
</dbReference>
<dbReference type="GO" id="GO:0001945">
    <property type="term" value="P:lymph vessel development"/>
    <property type="evidence" value="ECO:0000250"/>
    <property type="project" value="BHF-UCL"/>
</dbReference>
<dbReference type="GO" id="GO:0001946">
    <property type="term" value="P:lymphangiogenesis"/>
    <property type="evidence" value="ECO:0000315"/>
    <property type="project" value="UniProtKB"/>
</dbReference>
<dbReference type="GO" id="GO:0043066">
    <property type="term" value="P:negative regulation of apoptotic process"/>
    <property type="evidence" value="ECO:0000315"/>
    <property type="project" value="UniProtKB"/>
</dbReference>
<dbReference type="GO" id="GO:0018108">
    <property type="term" value="P:peptidyl-tyrosine phosphorylation"/>
    <property type="evidence" value="ECO:0000314"/>
    <property type="project" value="UniProtKB"/>
</dbReference>
<dbReference type="GO" id="GO:0030335">
    <property type="term" value="P:positive regulation of cell migration"/>
    <property type="evidence" value="ECO:0000318"/>
    <property type="project" value="GO_Central"/>
</dbReference>
<dbReference type="GO" id="GO:0008284">
    <property type="term" value="P:positive regulation of cell population proliferation"/>
    <property type="evidence" value="ECO:0000315"/>
    <property type="project" value="UniProtKB"/>
</dbReference>
<dbReference type="GO" id="GO:0010595">
    <property type="term" value="P:positive regulation of endothelial cell migration"/>
    <property type="evidence" value="ECO:0000315"/>
    <property type="project" value="UniProtKB"/>
</dbReference>
<dbReference type="GO" id="GO:0001938">
    <property type="term" value="P:positive regulation of endothelial cell proliferation"/>
    <property type="evidence" value="ECO:0000315"/>
    <property type="project" value="UniProtKB"/>
</dbReference>
<dbReference type="GO" id="GO:0070374">
    <property type="term" value="P:positive regulation of ERK1 and ERK2 cascade"/>
    <property type="evidence" value="ECO:0000315"/>
    <property type="project" value="UniProtKB"/>
</dbReference>
<dbReference type="GO" id="GO:0046330">
    <property type="term" value="P:positive regulation of JNK cascade"/>
    <property type="evidence" value="ECO:0000315"/>
    <property type="project" value="UniProtKB"/>
</dbReference>
<dbReference type="GO" id="GO:0043410">
    <property type="term" value="P:positive regulation of MAPK cascade"/>
    <property type="evidence" value="ECO:0000315"/>
    <property type="project" value="UniProtKB"/>
</dbReference>
<dbReference type="GO" id="GO:0001934">
    <property type="term" value="P:positive regulation of protein phosphorylation"/>
    <property type="evidence" value="ECO:0000315"/>
    <property type="project" value="UniProtKB"/>
</dbReference>
<dbReference type="GO" id="GO:0010575">
    <property type="term" value="P:positive regulation of vascular endothelial growth factor production"/>
    <property type="evidence" value="ECO:0000315"/>
    <property type="project" value="UniProtKB"/>
</dbReference>
<dbReference type="GO" id="GO:0046777">
    <property type="term" value="P:protein autophosphorylation"/>
    <property type="evidence" value="ECO:0000314"/>
    <property type="project" value="UniProtKB"/>
</dbReference>
<dbReference type="GO" id="GO:0060312">
    <property type="term" value="P:regulation of blood vessel remodeling"/>
    <property type="evidence" value="ECO:0000250"/>
    <property type="project" value="UniProtKB"/>
</dbReference>
<dbReference type="GO" id="GO:0003016">
    <property type="term" value="P:respiratory system process"/>
    <property type="evidence" value="ECO:0007669"/>
    <property type="project" value="Ensembl"/>
</dbReference>
<dbReference type="GO" id="GO:0002040">
    <property type="term" value="P:sprouting angiogenesis"/>
    <property type="evidence" value="ECO:0000250"/>
    <property type="project" value="UniProtKB"/>
</dbReference>
<dbReference type="GO" id="GO:0048010">
    <property type="term" value="P:vascular endothelial growth factor receptor signaling pathway"/>
    <property type="evidence" value="ECO:0000314"/>
    <property type="project" value="MGI"/>
</dbReference>
<dbReference type="GO" id="GO:0038084">
    <property type="term" value="P:vascular endothelial growth factor signaling pathway"/>
    <property type="evidence" value="ECO:0000314"/>
    <property type="project" value="UniProtKB"/>
</dbReference>
<dbReference type="GO" id="GO:0001944">
    <property type="term" value="P:vasculature development"/>
    <property type="evidence" value="ECO:0000250"/>
    <property type="project" value="UniProtKB"/>
</dbReference>
<dbReference type="CDD" id="cd00096">
    <property type="entry name" value="Ig"/>
    <property type="match status" value="1"/>
</dbReference>
<dbReference type="CDD" id="cd05862">
    <property type="entry name" value="IgI_VEGFR"/>
    <property type="match status" value="1"/>
</dbReference>
<dbReference type="CDD" id="cd05863">
    <property type="entry name" value="IgI_VEGFR-3"/>
    <property type="match status" value="1"/>
</dbReference>
<dbReference type="CDD" id="cd05102">
    <property type="entry name" value="PTKc_VEGFR3"/>
    <property type="match status" value="1"/>
</dbReference>
<dbReference type="DisProt" id="DP02600"/>
<dbReference type="FunFam" id="1.10.510.10:FF:000077">
    <property type="entry name" value="Vascular endothelial growth factor receptor 2"/>
    <property type="match status" value="1"/>
</dbReference>
<dbReference type="FunFam" id="2.60.40.10:FF:000532">
    <property type="entry name" value="Vascular endothelial growth factor receptor 2"/>
    <property type="match status" value="1"/>
</dbReference>
<dbReference type="FunFam" id="3.30.200.20:FF:000041">
    <property type="entry name" value="Vascular endothelial growth factor receptor 2"/>
    <property type="match status" value="1"/>
</dbReference>
<dbReference type="FunFam" id="2.60.40.10:FF:000143">
    <property type="entry name" value="Vascular endothelial growth factor receptor 3"/>
    <property type="match status" value="1"/>
</dbReference>
<dbReference type="FunFam" id="2.60.40.10:FF:000247">
    <property type="entry name" value="Vascular endothelial growth factor receptor 3"/>
    <property type="match status" value="1"/>
</dbReference>
<dbReference type="FunFam" id="2.60.40.10:FF:000411">
    <property type="entry name" value="Vascular endothelial growth factor receptor 3"/>
    <property type="match status" value="1"/>
</dbReference>
<dbReference type="FunFam" id="2.60.40.10:FF:000479">
    <property type="entry name" value="Vascular endothelial growth factor receptor 3"/>
    <property type="match status" value="1"/>
</dbReference>
<dbReference type="FunFam" id="2.60.40.10:FF:000548">
    <property type="entry name" value="vascular endothelial growth factor receptor 3"/>
    <property type="match status" value="1"/>
</dbReference>
<dbReference type="FunFam" id="2.60.40.10:FF:000949">
    <property type="entry name" value="vascular endothelial growth factor receptor 3"/>
    <property type="match status" value="1"/>
</dbReference>
<dbReference type="Gene3D" id="2.60.40.10">
    <property type="entry name" value="Immunoglobulins"/>
    <property type="match status" value="7"/>
</dbReference>
<dbReference type="Gene3D" id="3.30.200.20">
    <property type="entry name" value="Phosphorylase Kinase, domain 1"/>
    <property type="match status" value="1"/>
</dbReference>
<dbReference type="Gene3D" id="1.10.510.10">
    <property type="entry name" value="Transferase(Phosphotransferase) domain 1"/>
    <property type="match status" value="1"/>
</dbReference>
<dbReference type="InterPro" id="IPR007110">
    <property type="entry name" value="Ig-like_dom"/>
</dbReference>
<dbReference type="InterPro" id="IPR036179">
    <property type="entry name" value="Ig-like_dom_sf"/>
</dbReference>
<dbReference type="InterPro" id="IPR013783">
    <property type="entry name" value="Ig-like_fold"/>
</dbReference>
<dbReference type="InterPro" id="IPR013098">
    <property type="entry name" value="Ig_I-set"/>
</dbReference>
<dbReference type="InterPro" id="IPR003599">
    <property type="entry name" value="Ig_sub"/>
</dbReference>
<dbReference type="InterPro" id="IPR003598">
    <property type="entry name" value="Ig_sub2"/>
</dbReference>
<dbReference type="InterPro" id="IPR011009">
    <property type="entry name" value="Kinase-like_dom_sf"/>
</dbReference>
<dbReference type="InterPro" id="IPR000719">
    <property type="entry name" value="Prot_kinase_dom"/>
</dbReference>
<dbReference type="InterPro" id="IPR017441">
    <property type="entry name" value="Protein_kinase_ATP_BS"/>
</dbReference>
<dbReference type="InterPro" id="IPR050122">
    <property type="entry name" value="RTK"/>
</dbReference>
<dbReference type="InterPro" id="IPR001245">
    <property type="entry name" value="Ser-Thr/Tyr_kinase_cat_dom"/>
</dbReference>
<dbReference type="InterPro" id="IPR008266">
    <property type="entry name" value="Tyr_kinase_AS"/>
</dbReference>
<dbReference type="InterPro" id="IPR020635">
    <property type="entry name" value="Tyr_kinase_cat_dom"/>
</dbReference>
<dbReference type="InterPro" id="IPR001824">
    <property type="entry name" value="Tyr_kinase_rcpt_3_CS"/>
</dbReference>
<dbReference type="InterPro" id="IPR041348">
    <property type="entry name" value="VEGFR-2_TMD"/>
</dbReference>
<dbReference type="InterPro" id="IPR055229">
    <property type="entry name" value="VEGFR1-3_5th"/>
</dbReference>
<dbReference type="InterPro" id="IPR055238">
    <property type="entry name" value="VEGFR1-3_N_Ig-like"/>
</dbReference>
<dbReference type="PANTHER" id="PTHR24416">
    <property type="entry name" value="TYROSINE-PROTEIN KINASE RECEPTOR"/>
    <property type="match status" value="1"/>
</dbReference>
<dbReference type="PANTHER" id="PTHR24416:SF49">
    <property type="entry name" value="VASCULAR ENDOTHELIAL GROWTH FACTOR RECEPTOR 3"/>
    <property type="match status" value="1"/>
</dbReference>
<dbReference type="Pfam" id="PF07679">
    <property type="entry name" value="I-set"/>
    <property type="match status" value="1"/>
</dbReference>
<dbReference type="Pfam" id="PF13927">
    <property type="entry name" value="Ig_3"/>
    <property type="match status" value="1"/>
</dbReference>
<dbReference type="Pfam" id="PF22971">
    <property type="entry name" value="Ig_VEGFR-1-like_5th"/>
    <property type="match status" value="1"/>
</dbReference>
<dbReference type="Pfam" id="PF07714">
    <property type="entry name" value="PK_Tyr_Ser-Thr"/>
    <property type="match status" value="1"/>
</dbReference>
<dbReference type="Pfam" id="PF21339">
    <property type="entry name" value="VEGFR-1-like_Ig-like"/>
    <property type="match status" value="1"/>
</dbReference>
<dbReference type="Pfam" id="PF17988">
    <property type="entry name" value="VEGFR-2_TMD"/>
    <property type="match status" value="1"/>
</dbReference>
<dbReference type="Pfam" id="PF22854">
    <property type="entry name" value="VEGFR1-3_N_Ig-like"/>
    <property type="match status" value="1"/>
</dbReference>
<dbReference type="PIRSF" id="PIRSF000615">
    <property type="entry name" value="TyrPK_CSF1-R"/>
    <property type="match status" value="1"/>
</dbReference>
<dbReference type="PRINTS" id="PR01832">
    <property type="entry name" value="VEGFRECEPTOR"/>
</dbReference>
<dbReference type="PRINTS" id="PR01835">
    <property type="entry name" value="VEGFRECEPTR3"/>
</dbReference>
<dbReference type="SMART" id="SM00409">
    <property type="entry name" value="IG"/>
    <property type="match status" value="6"/>
</dbReference>
<dbReference type="SMART" id="SM00408">
    <property type="entry name" value="IGc2"/>
    <property type="match status" value="4"/>
</dbReference>
<dbReference type="SMART" id="SM00219">
    <property type="entry name" value="TyrKc"/>
    <property type="match status" value="1"/>
</dbReference>
<dbReference type="SUPFAM" id="SSF48726">
    <property type="entry name" value="Immunoglobulin"/>
    <property type="match status" value="6"/>
</dbReference>
<dbReference type="SUPFAM" id="SSF56112">
    <property type="entry name" value="Protein kinase-like (PK-like)"/>
    <property type="match status" value="1"/>
</dbReference>
<dbReference type="PROSITE" id="PS50835">
    <property type="entry name" value="IG_LIKE"/>
    <property type="match status" value="6"/>
</dbReference>
<dbReference type="PROSITE" id="PS00107">
    <property type="entry name" value="PROTEIN_KINASE_ATP"/>
    <property type="match status" value="1"/>
</dbReference>
<dbReference type="PROSITE" id="PS50011">
    <property type="entry name" value="PROTEIN_KINASE_DOM"/>
    <property type="match status" value="1"/>
</dbReference>
<dbReference type="PROSITE" id="PS00109">
    <property type="entry name" value="PROTEIN_KINASE_TYR"/>
    <property type="match status" value="1"/>
</dbReference>
<dbReference type="PROSITE" id="PS00240">
    <property type="entry name" value="RECEPTOR_TYR_KIN_III"/>
    <property type="match status" value="1"/>
</dbReference>
<reference key="1">
    <citation type="journal article" date="1992" name="Cancer Res.">
        <title>FLT4 receptor tyrosine kinase contains seven immunoglobulin-like loops and is expressed in multiple human tissues and cell lines.</title>
        <authorList>
            <person name="Pajusola K."/>
            <person name="Aprelikova O."/>
            <person name="Korhonen J."/>
            <person name="Kaipainen A."/>
            <person name="Pertovaara L."/>
            <person name="Alitalo R."/>
            <person name="Alitalo K."/>
        </authorList>
    </citation>
    <scope>NUCLEOTIDE SEQUENCE [MRNA] (ISOFORM 2)</scope>
    <scope>TISSUE SPECIFICITY</scope>
</reference>
<reference key="2">
    <citation type="journal article" date="1993" name="Cancer Res.">
        <authorList>
            <person name="Pajusola K."/>
            <person name="Aprelikova O."/>
            <person name="Korhonen J."/>
            <person name="Kaipainen A."/>
            <person name="Pertovaara L."/>
            <person name="Alitalo R."/>
            <person name="Alitalo K."/>
        </authorList>
    </citation>
    <scope>ERRATUM OF PUBMED:1327515</scope>
</reference>
<reference key="3">
    <citation type="journal article" date="1992" name="Genomics">
        <title>Chromosomal localization of FLT4, a novel receptor-type tyrosine kinase gene.</title>
        <authorList>
            <person name="Galland F."/>
            <person name="Karamysheva A."/>
            <person name="Mattei M.-G."/>
            <person name="Rosnet O."/>
            <person name="Marchetto S."/>
            <person name="Birnbaum D."/>
        </authorList>
    </citation>
    <scope>NUCLEOTIDE SEQUENCE [MRNA] (ISOFORM 2)</scope>
</reference>
<reference key="4">
    <citation type="journal article" date="1993" name="Oncogene">
        <title>The FLT4 gene encodes a transmembrane tyrosine kinase related to the vascular endothelial growth factor receptor.</title>
        <authorList>
            <person name="Galland F."/>
            <person name="Karamysheva A."/>
            <person name="Pebusque M.-J."/>
            <person name="Borg J.-P."/>
            <person name="Rottapel R."/>
            <person name="Dubreuil P."/>
            <person name="Rosnet O."/>
            <person name="Birnbaum D."/>
        </authorList>
    </citation>
    <scope>NUCLEOTIDE SEQUENCE [MRNA] (ISOFORM 2)</scope>
    <scope>VARIANTS GLN-890 AND HIS-1146</scope>
    <source>
        <tissue>Placenta</tissue>
    </source>
</reference>
<reference key="5">
    <citation type="journal article" date="1996" name="Proc. Natl. Acad. Sci. U.S.A.">
        <title>Vascular endothelial growth factor-related protein: a ligand and specific activator of the tyrosine kinase receptor Flt4.</title>
        <authorList>
            <person name="Lee J."/>
            <person name="Gray A."/>
            <person name="Yuan J."/>
            <person name="Luoh S.-M."/>
            <person name="Avraham H."/>
            <person name="Wood W.I."/>
        </authorList>
    </citation>
    <scope>NUCLEOTIDE SEQUENCE [MRNA] (ISOFORM 2)</scope>
    <scope>INTERACTION WITH VEGFC</scope>
    <scope>PHOSPHORYLATION</scope>
    <scope>FUNCTION IN CELL PROLIFERATION</scope>
</reference>
<reference key="6">
    <citation type="journal article" date="2008" name="Arthritis Res. Ther.">
        <title>Novel splice variants derived from the receptor tyrosine kinase superfamily are potential therapeutics for rheumatoid arthritis.</title>
        <authorList>
            <person name="Jin P."/>
            <person name="Zhang J."/>
            <person name="Sumariwalla P.F."/>
            <person name="Ni I."/>
            <person name="Jorgensen B."/>
            <person name="Crawford D."/>
            <person name="Phillips S."/>
            <person name="Feldmann M."/>
            <person name="Shepard H.M."/>
            <person name="Paleolog E.M."/>
        </authorList>
    </citation>
    <scope>NUCLEOTIDE SEQUENCE [MRNA] (ISOFORM 3)</scope>
    <scope>INTERACTION WITH VEGFD</scope>
    <scope>SUBCELLULAR LOCATION</scope>
</reference>
<reference key="7">
    <citation type="submission" date="2003-02" db="EMBL/GenBank/DDBJ databases">
        <authorList>
            <person name="Lian Z."/>
            <person name="Feitelson M."/>
        </authorList>
    </citation>
    <scope>NUCLEOTIDE SEQUENCE [MRNA] (ISOFORMS 1 AND 2)</scope>
    <scope>VARIANTS GLN-890 AND HIS-1146</scope>
</reference>
<reference key="8">
    <citation type="journal article" date="2004" name="Nat. Genet.">
        <title>Complete sequencing and characterization of 21,243 full-length human cDNAs.</title>
        <authorList>
            <person name="Ota T."/>
            <person name="Suzuki Y."/>
            <person name="Nishikawa T."/>
            <person name="Otsuki T."/>
            <person name="Sugiyama T."/>
            <person name="Irie R."/>
            <person name="Wakamatsu A."/>
            <person name="Hayashi K."/>
            <person name="Sato H."/>
            <person name="Nagai K."/>
            <person name="Kimura K."/>
            <person name="Makita H."/>
            <person name="Sekine M."/>
            <person name="Obayashi M."/>
            <person name="Nishi T."/>
            <person name="Shibahara T."/>
            <person name="Tanaka T."/>
            <person name="Ishii S."/>
            <person name="Yamamoto J."/>
            <person name="Saito K."/>
            <person name="Kawai Y."/>
            <person name="Isono Y."/>
            <person name="Nakamura Y."/>
            <person name="Nagahari K."/>
            <person name="Murakami K."/>
            <person name="Yasuda T."/>
            <person name="Iwayanagi T."/>
            <person name="Wagatsuma M."/>
            <person name="Shiratori A."/>
            <person name="Sudo H."/>
            <person name="Hosoiri T."/>
            <person name="Kaku Y."/>
            <person name="Kodaira H."/>
            <person name="Kondo H."/>
            <person name="Sugawara M."/>
            <person name="Takahashi M."/>
            <person name="Kanda K."/>
            <person name="Yokoi T."/>
            <person name="Furuya T."/>
            <person name="Kikkawa E."/>
            <person name="Omura Y."/>
            <person name="Abe K."/>
            <person name="Kamihara K."/>
            <person name="Katsuta N."/>
            <person name="Sato K."/>
            <person name="Tanikawa M."/>
            <person name="Yamazaki M."/>
            <person name="Ninomiya K."/>
            <person name="Ishibashi T."/>
            <person name="Yamashita H."/>
            <person name="Murakawa K."/>
            <person name="Fujimori K."/>
            <person name="Tanai H."/>
            <person name="Kimata M."/>
            <person name="Watanabe M."/>
            <person name="Hiraoka S."/>
            <person name="Chiba Y."/>
            <person name="Ishida S."/>
            <person name="Ono Y."/>
            <person name="Takiguchi S."/>
            <person name="Watanabe S."/>
            <person name="Yosida M."/>
            <person name="Hotuta T."/>
            <person name="Kusano J."/>
            <person name="Kanehori K."/>
            <person name="Takahashi-Fujii A."/>
            <person name="Hara H."/>
            <person name="Tanase T.-O."/>
            <person name="Nomura Y."/>
            <person name="Togiya S."/>
            <person name="Komai F."/>
            <person name="Hara R."/>
            <person name="Takeuchi K."/>
            <person name="Arita M."/>
            <person name="Imose N."/>
            <person name="Musashino K."/>
            <person name="Yuuki H."/>
            <person name="Oshima A."/>
            <person name="Sasaki N."/>
            <person name="Aotsuka S."/>
            <person name="Yoshikawa Y."/>
            <person name="Matsunawa H."/>
            <person name="Ichihara T."/>
            <person name="Shiohata N."/>
            <person name="Sano S."/>
            <person name="Moriya S."/>
            <person name="Momiyama H."/>
            <person name="Satoh N."/>
            <person name="Takami S."/>
            <person name="Terashima Y."/>
            <person name="Suzuki O."/>
            <person name="Nakagawa S."/>
            <person name="Senoh A."/>
            <person name="Mizoguchi H."/>
            <person name="Goto Y."/>
            <person name="Shimizu F."/>
            <person name="Wakebe H."/>
            <person name="Hishigaki H."/>
            <person name="Watanabe T."/>
            <person name="Sugiyama A."/>
            <person name="Takemoto M."/>
            <person name="Kawakami B."/>
            <person name="Yamazaki M."/>
            <person name="Watanabe K."/>
            <person name="Kumagai A."/>
            <person name="Itakura S."/>
            <person name="Fukuzumi Y."/>
            <person name="Fujimori Y."/>
            <person name="Komiyama M."/>
            <person name="Tashiro H."/>
            <person name="Tanigami A."/>
            <person name="Fujiwara T."/>
            <person name="Ono T."/>
            <person name="Yamada K."/>
            <person name="Fujii Y."/>
            <person name="Ozaki K."/>
            <person name="Hirao M."/>
            <person name="Ohmori Y."/>
            <person name="Kawabata A."/>
            <person name="Hikiji T."/>
            <person name="Kobatake N."/>
            <person name="Inagaki H."/>
            <person name="Ikema Y."/>
            <person name="Okamoto S."/>
            <person name="Okitani R."/>
            <person name="Kawakami T."/>
            <person name="Noguchi S."/>
            <person name="Itoh T."/>
            <person name="Shigeta K."/>
            <person name="Senba T."/>
            <person name="Matsumura K."/>
            <person name="Nakajima Y."/>
            <person name="Mizuno T."/>
            <person name="Morinaga M."/>
            <person name="Sasaki M."/>
            <person name="Togashi T."/>
            <person name="Oyama M."/>
            <person name="Hata H."/>
            <person name="Watanabe M."/>
            <person name="Komatsu T."/>
            <person name="Mizushima-Sugano J."/>
            <person name="Satoh T."/>
            <person name="Shirai Y."/>
            <person name="Takahashi Y."/>
            <person name="Nakagawa K."/>
            <person name="Okumura K."/>
            <person name="Nagase T."/>
            <person name="Nomura N."/>
            <person name="Kikuchi H."/>
            <person name="Masuho Y."/>
            <person name="Yamashita R."/>
            <person name="Nakai K."/>
            <person name="Yada T."/>
            <person name="Nakamura Y."/>
            <person name="Ohara O."/>
            <person name="Isogai T."/>
            <person name="Sugano S."/>
        </authorList>
    </citation>
    <scope>NUCLEOTIDE SEQUENCE [LARGE SCALE MRNA] (ISOFORM 2)</scope>
    <scope>VARIANT GLN-890</scope>
    <source>
        <tissue>Placenta</tissue>
    </source>
</reference>
<reference key="9">
    <citation type="journal article" date="2004" name="Nature">
        <title>The DNA sequence and comparative analysis of human chromosome 5.</title>
        <authorList>
            <person name="Schmutz J."/>
            <person name="Martin J."/>
            <person name="Terry A."/>
            <person name="Couronne O."/>
            <person name="Grimwood J."/>
            <person name="Lowry S."/>
            <person name="Gordon L.A."/>
            <person name="Scott D."/>
            <person name="Xie G."/>
            <person name="Huang W."/>
            <person name="Hellsten U."/>
            <person name="Tran-Gyamfi M."/>
            <person name="She X."/>
            <person name="Prabhakar S."/>
            <person name="Aerts A."/>
            <person name="Altherr M."/>
            <person name="Bajorek E."/>
            <person name="Black S."/>
            <person name="Branscomb E."/>
            <person name="Caoile C."/>
            <person name="Challacombe J.F."/>
            <person name="Chan Y.M."/>
            <person name="Denys M."/>
            <person name="Detter J.C."/>
            <person name="Escobar J."/>
            <person name="Flowers D."/>
            <person name="Fotopulos D."/>
            <person name="Glavina T."/>
            <person name="Gomez M."/>
            <person name="Gonzales E."/>
            <person name="Goodstein D."/>
            <person name="Grigoriev I."/>
            <person name="Groza M."/>
            <person name="Hammon N."/>
            <person name="Hawkins T."/>
            <person name="Haydu L."/>
            <person name="Israni S."/>
            <person name="Jett J."/>
            <person name="Kadner K."/>
            <person name="Kimball H."/>
            <person name="Kobayashi A."/>
            <person name="Lopez F."/>
            <person name="Lou Y."/>
            <person name="Martinez D."/>
            <person name="Medina C."/>
            <person name="Morgan J."/>
            <person name="Nandkeshwar R."/>
            <person name="Noonan J.P."/>
            <person name="Pitluck S."/>
            <person name="Pollard M."/>
            <person name="Predki P."/>
            <person name="Priest J."/>
            <person name="Ramirez L."/>
            <person name="Retterer J."/>
            <person name="Rodriguez A."/>
            <person name="Rogers S."/>
            <person name="Salamov A."/>
            <person name="Salazar A."/>
            <person name="Thayer N."/>
            <person name="Tice H."/>
            <person name="Tsai M."/>
            <person name="Ustaszewska A."/>
            <person name="Vo N."/>
            <person name="Wheeler J."/>
            <person name="Wu K."/>
            <person name="Yang J."/>
            <person name="Dickson M."/>
            <person name="Cheng J.-F."/>
            <person name="Eichler E.E."/>
            <person name="Olsen A."/>
            <person name="Pennacchio L.A."/>
            <person name="Rokhsar D.S."/>
            <person name="Richardson P."/>
            <person name="Lucas S.M."/>
            <person name="Myers R.M."/>
            <person name="Rubin E.M."/>
        </authorList>
    </citation>
    <scope>NUCLEOTIDE SEQUENCE [LARGE SCALE GENOMIC DNA]</scope>
</reference>
<reference key="10">
    <citation type="journal article" date="1992" name="Cancer Res.">
        <title>FLT4, a novel class III receptor tyrosine kinase in chromosome 5q33-qter.</title>
        <authorList>
            <person name="Aprelikova O."/>
            <person name="Pajusola K."/>
            <person name="Partanen J."/>
            <person name="Armstrong E."/>
            <person name="Alitalo R."/>
            <person name="Bailey S.K."/>
            <person name="McMahon J."/>
            <person name="Wasmuth J."/>
            <person name="Huebner K."/>
            <person name="Alitalo K."/>
        </authorList>
    </citation>
    <scope>NUCLEOTIDE SEQUENCE [MRNA] OF 761-1190</scope>
</reference>
<reference key="11">
    <citation type="journal article" date="1993" name="Oncogene">
        <title>Two human FLT4 receptor tyrosine kinase isoforms with distinct carboxy terminal tails are produced by alternative processing of primary transcripts.</title>
        <authorList>
            <person name="Pajusola K."/>
            <person name="Aprelikova O."/>
            <person name="Armstrong E."/>
            <person name="Morris S."/>
            <person name="Alitalo K."/>
        </authorList>
    </citation>
    <scope>NUCLEOTIDE SEQUENCE [MRNA] OF 1293-1363 (ISOFORM 1)</scope>
    <scope>ALTERNATIVE SPLICING</scope>
</reference>
<reference key="12">
    <citation type="journal article" date="2004" name="Protein Sci.">
        <title>Signal peptide prediction based on analysis of experimentally verified cleavage sites.</title>
        <authorList>
            <person name="Zhang Z."/>
            <person name="Henzel W.J."/>
        </authorList>
    </citation>
    <scope>PROTEIN SEQUENCE OF 25-39</scope>
</reference>
<reference key="13">
    <citation type="journal article" date="1995" name="Oncogene">
        <title>Biochemical characterization of two isoforms of FLT4, a VEGF receptor-related tyrosine kinase.</title>
        <authorList>
            <person name="Borg J.P."/>
            <person name="deLapeyriere O."/>
            <person name="Noguchi T."/>
            <person name="Rottapel R."/>
            <person name="Dubreuil P."/>
            <person name="Birnbaum D."/>
        </authorList>
    </citation>
    <scope>CATALYTIC ACTIVITY</scope>
    <scope>GLYCOSYLATION</scope>
    <scope>SUBCELLULAR LOCATION</scope>
</reference>
<reference key="14">
    <citation type="journal article" date="1995" name="Oncogene">
        <title>Mutation at tyrosine residue 1337 abrogates ligand-dependent transforming capacity of the FLT4 receptor.</title>
        <authorList>
            <person name="Fournier E."/>
            <person name="Dubreuil P."/>
            <person name="Birnbaum D."/>
            <person name="Borg J.P."/>
        </authorList>
    </citation>
    <scope>FUNCTION IN CELL PROLIFERATION AND PHOSPHORYLATION OF SHC1</scope>
    <scope>CHARACTERIZATION OF ISOFORM 1 AND ISOFORM 2</scope>
    <scope>INTERACTION WITH SHC1 AND GRB2</scope>
    <scope>AUTOPHOSPHORYLATION</scope>
    <scope>MUTAGENESIS OF TYR-1333; TYR-1337 AND TYR-1363</scope>
    <scope>TISSUE SPECIFICITY</scope>
</reference>
<reference key="15">
    <citation type="journal article" date="1998" name="Proc. Natl. Acad. Sci. U.S.A.">
        <title>Vascular endothelial growth factor D (VEGF-D) is a ligand for the tyrosine kinases VEGF receptor 2 (Flk1) and VEGF receptor 3 (Flt4).</title>
        <authorList>
            <person name="Achen M.G."/>
            <person name="Jeltsch M."/>
            <person name="Kukk E."/>
            <person name="Maekinen T."/>
            <person name="Vitali A."/>
            <person name="Wilks A.F."/>
            <person name="Alitalo K."/>
            <person name="Stacker S.A."/>
        </authorList>
    </citation>
    <scope>INTERACTION WITH VEGFD</scope>
    <scope>FUNCTION AS VEGFD RECEPTOR</scope>
    <scope>AUTOPHOSPHORYLATION</scope>
</reference>
<reference key="16">
    <citation type="journal article" date="2001" name="EMBO J.">
        <title>Isolated lymphatic endothelial cells transduce growth, survival and migratory signals via the VEGF-C/D receptor VEGFR-3.</title>
        <authorList>
            <person name="Makinen T."/>
            <person name="Veikkola T."/>
            <person name="Mustjoki S."/>
            <person name="Karpanen T."/>
            <person name="Catimel B."/>
            <person name="Nice E.C."/>
            <person name="Wise L."/>
            <person name="Mercer A."/>
            <person name="Kowalski H."/>
            <person name="Kerjaschki D."/>
            <person name="Stacker S.A."/>
            <person name="Achen M.G."/>
            <person name="Alitalo K."/>
        </authorList>
    </citation>
    <scope>FUNCTION AS RECEPTOR FOR VEGFC AND VEGFD IN CELL SURVIVAL; PROLIFERATION AND MIGRATION</scope>
    <scope>FUNCTION IN ACTIVATION OF PROTEIN KINASE C; AKT1; PIK3R1; MAPK1/ERK2 AND MAPK3/ERK1</scope>
</reference>
<reference key="17">
    <citation type="journal article" date="2003" name="J. Biol. Chem.">
        <title>Ligand-induced vascular endothelial growth factor receptor-3 (VEGFR-3) heterodimerization with VEGFR-2 in primary lymphatic endothelial cells regulates tyrosine phosphorylation sites.</title>
        <authorList>
            <person name="Dixelius J."/>
            <person name="Makinen T."/>
            <person name="Wirzenius M."/>
            <person name="Karkkainen M.J."/>
            <person name="Wernstedt C."/>
            <person name="Alitalo K."/>
            <person name="Claesson-Welsh L."/>
        </authorList>
    </citation>
    <scope>INTERACTION WITH KDR</scope>
    <scope>CATALYTIC ACTIVITY</scope>
    <scope>AUTOPHOSPHORYLATION</scope>
    <scope>CHARACTERIZATION OF VARIANT LMPHM1 PRO-1041</scope>
    <scope>MUTAGENESIS OF LYS-879; TYR-1230; TYR-1231; TYR-1265; TYR-1333; TYR-1337 AND TYR-1363</scope>
    <scope>PHOSPHORYLATION AT TYR-1230; TYR-1231; TYR-1265; TYR-1333; TYR-1337 AND TYR-1363</scope>
</reference>
<reference key="18">
    <citation type="journal article" date="2004" name="Biochem. Biophys. Res. Commun.">
        <title>Heterodimerization with vascular endothelial growth factor receptor-2 (VEGFR-2) is necessary for VEGFR-3 activity.</title>
        <authorList>
            <person name="Alam A."/>
            <person name="Herault J.P."/>
            <person name="Barron P."/>
            <person name="Favier B."/>
            <person name="Fons P."/>
            <person name="Delesque-Touchard N."/>
            <person name="Senegas I."/>
            <person name="Laboudie P."/>
            <person name="Bonnin J."/>
            <person name="Cassan C."/>
            <person name="Savi P."/>
            <person name="Ruggeri B."/>
            <person name="Carmeliet P."/>
            <person name="Bono F."/>
            <person name="Herbert J.M."/>
        </authorList>
    </citation>
    <scope>FUNCTION IN KDR SIGNALING AND IN ANGIOGENESIS</scope>
    <scope>INTERACTION WITH KDR</scope>
    <scope>PHOSPHORYLATION</scope>
</reference>
<reference key="19">
    <citation type="journal article" date="2004" name="J. Biol. Chem.">
        <title>Activation of vascular endothelial growth factor receptor-3 and its downstream signaling promote cell survival under oxidative stress.</title>
        <authorList>
            <person name="Wang J.F."/>
            <person name="Zhang X."/>
            <person name="Groopman J.E."/>
        </authorList>
    </citation>
    <scope>FUNCTION IN CELL SURVIVAL</scope>
    <scope>PHOSPHORYLATION IN RESPONSE TO OXIDATIVE STRESS</scope>
    <scope>INTERACTION WITH PIK3R1; SHC1; GRB2; PTPN11 AND PLCG1</scope>
    <scope>ACTIVITY REGULATION BY MAZ51</scope>
    <scope>CHARACTERIZATION OF VARIANT LMPHM1 ARG-857</scope>
</reference>
<reference key="20">
    <citation type="journal article" date="2005" name="Blood">
        <title>Direct recruitment of CRK and GRB2 to VEGFR-3 induces proliferation, migration, and survival of endothelial cells through the activation of ERK, AKT, and JNK pathways.</title>
        <authorList>
            <person name="Salameh A."/>
            <person name="Galvagni F."/>
            <person name="Bardelli M."/>
            <person name="Bussolino F."/>
            <person name="Oliviero S."/>
        </authorList>
    </citation>
    <scope>FUNCTION IN ACTIVATION OF AKT1; MAPK1/ERK2; MAPK3/ERK1 AND MAPK8</scope>
    <scope>FUNCTION IN PROMOTING CELL SURVIVAL; PROLIFERATION AND MIGRATION</scope>
    <scope>CHARACTERIZATION OF ISOFORM 1 AND ISOFORM 2</scope>
    <scope>INTERACTION WITH CRK AND GRB2</scope>
    <scope>PHOSPHORYLATION AT TYR-1063; TYR-1068; TYR-1230; TYR-1231 AND TYR-1337</scope>
    <scope>MUTAGENESIS OF TYR-1063; TYR-1068; TYR-1230 AND TYR-1231</scope>
</reference>
<reference key="21">
    <citation type="journal article" date="2005" name="J. Proteome Res.">
        <title>Human plasma N-glycoproteome analysis by immunoaffinity subtraction, hydrazide chemistry, and mass spectrometry.</title>
        <authorList>
            <person name="Liu T."/>
            <person name="Qian W.-J."/>
            <person name="Gritsenko M.A."/>
            <person name="Camp D.G. II"/>
            <person name="Monroe M.E."/>
            <person name="Moore R.J."/>
            <person name="Smith R.D."/>
        </authorList>
    </citation>
    <scope>GLYCOSYLATION [LARGE SCALE ANALYSIS] AT ASN-527</scope>
    <source>
        <tissue>Plasma</tissue>
    </source>
</reference>
<reference key="22">
    <citation type="journal article" date="2006" name="Cancer Res.">
        <title>Vascular endothelial growth factor receptor-3 and focal adhesion kinase bind and suppress apoptosis in breast cancer cells.</title>
        <authorList>
            <person name="Garces C.A."/>
            <person name="Kurenova E.V."/>
            <person name="Golubovskaya V.M."/>
            <person name="Cance W.G."/>
        </authorList>
    </citation>
    <scope>FUNCTION IN PROMOTING CELL SURVIVAL</scope>
    <scope>INTERACTION WITH PTK2/FAK1</scope>
    <scope>SUBCELLULAR LOCATION</scope>
</reference>
<reference key="23">
    <citation type="journal article" date="2007" name="FASEB J.">
        <title>Cooperative and redundant roles of VEGFR-2 and VEGFR-3 signaling in adult lymphangiogenesis.</title>
        <authorList>
            <person name="Goldman J."/>
            <person name="Rutkowski J.M."/>
            <person name="Shields J.D."/>
            <person name="Pasquier M.C."/>
            <person name="Cui Y."/>
            <person name="Schmokel H.G."/>
            <person name="Willey S."/>
            <person name="Hicklin D.J."/>
            <person name="Pytowski B."/>
            <person name="Swartz M.A."/>
        </authorList>
    </citation>
    <scope>FUNCTION IN LYMPHANGIOGENESIS</scope>
</reference>
<reference key="24">
    <citation type="journal article" date="2009" name="Am. J. Pathol.">
        <title>Autocrine loop between vascular endothelial growth factor (VEGF)-C and VEGF receptor-3 positively regulates tumor-associated lymphangiogenesis in oral squamoid cancer cells.</title>
        <authorList>
            <person name="Matsuura M."/>
            <person name="Onimaru M."/>
            <person name="Yonemitsu Y."/>
            <person name="Suzuki H."/>
            <person name="Nakano T."/>
            <person name="Ishibashi H."/>
            <person name="Shirasuna K."/>
            <person name="Sueishi K."/>
        </authorList>
    </citation>
    <scope>ROLE IN CANCER</scope>
    <scope>FUNCTION AS VEGFC RECEPTOR IN TUMOR LYMPHANGIOGENESIS; CELL PROLIFERATION; CELL SURVIVAL; IN ACTIVATION OF PIK3R1; AKT1 AND MAP KINASES AND IN UP-REGULATION OF VEGFA AND VEGFC EXPRESSION</scope>
    <scope>ACTIVITY REGULATION</scope>
    <scope>AUTOPHOSPHORYLATION</scope>
</reference>
<reference key="25">
    <citation type="journal article" date="2009" name="J. Med. Chem.">
        <title>Small molecule chloropyramine hydrochloride (C4) targets the binding site of focal adhesion kinase and vascular endothelial growth factor receptor 3 and suppresses breast cancer growth in vivo.</title>
        <authorList>
            <person name="Kurenova E.V."/>
            <person name="Hunt D.L."/>
            <person name="He D."/>
            <person name="Magis A.T."/>
            <person name="Ostrov D.A."/>
            <person name="Cance W.G."/>
        </authorList>
    </citation>
    <scope>ROLE IN CANCER</scope>
    <scope>INTERACTION WITH PTK2/FAK1</scope>
</reference>
<reference key="26">
    <citation type="journal article" date="2010" name="Am. J. Hum. Genet.">
        <title>Protein tyrosine phosphatase PTPN14 is a regulator of lymphatic function and choanal development in humans.</title>
        <authorList>
            <person name="Au A.C."/>
            <person name="Hernandez P.A."/>
            <person name="Lieber E."/>
            <person name="Nadroo A.M."/>
            <person name="Shen Y.M."/>
            <person name="Kelley K.A."/>
            <person name="Gelb B.D."/>
            <person name="Diaz G.A."/>
        </authorList>
    </citation>
    <scope>INTERACTION WITH PTPN14</scope>
</reference>
<reference key="27">
    <citation type="journal article" date="2010" name="Circ. Res.">
        <title>Endothelial cell adhesion to the extracellular matrix induces c-Src-dependent VEGFR-3 phosphorylation without the activation of the receptor intrinsic kinase activity.</title>
        <authorList>
            <person name="Galvagni F."/>
            <person name="Pennacchini S."/>
            <person name="Salameh A."/>
            <person name="Rocchigiani M."/>
            <person name="Neri F."/>
            <person name="Orlandini M."/>
            <person name="Petraglia F."/>
            <person name="Gotta S."/>
            <person name="Sardone G.L."/>
            <person name="Matteucci G."/>
            <person name="Terstappen G.C."/>
            <person name="Oliviero S."/>
        </authorList>
    </citation>
    <scope>PHOSPHORYLATION AT TYR-830; TYR-833; TYR-853; TYR-1063; TYR-1068; TYR-1333 AND TYR-1337</scope>
    <scope>IDENTIFICATION IN A COMPLEX WITH SRC AND ITGB1</scope>
    <scope>MUTAGENESIS OF TYR-1063; TYR-1068 AND TYR-1337</scope>
    <scope>ACTIVITY REGULATION BY MAZ51</scope>
    <scope>INTERACTION WITH ITGB1; CRK AND SHC1</scope>
    <scope>FUNCTION IN ACTIVATION OF MAPK8 AND IN REGULATION OF ANGIOGENIC SPROUTING</scope>
    <scope>IDENTIFICATION BY MASS SPECTROMETRY</scope>
</reference>
<reference key="28">
    <citation type="journal article" date="2010" name="EMBO J.">
        <title>VEGF receptor 2/-3 heterodimers detected in situ by proximity ligation on angiogenic sprouts.</title>
        <authorList>
            <person name="Nilsson I."/>
            <person name="Bahram F."/>
            <person name="Li X."/>
            <person name="Gualandi L."/>
            <person name="Koch S."/>
            <person name="Jarvius M."/>
            <person name="Soderberg O."/>
            <person name="Anisimov A."/>
            <person name="Kholova I."/>
            <person name="Pytowski B."/>
            <person name="Baldwin M."/>
            <person name="Yla-Herttuala S."/>
            <person name="Alitalo K."/>
            <person name="Kreuger J."/>
            <person name="Claesson-Welsh L."/>
        </authorList>
    </citation>
    <scope>INTERACTION WITH KDR</scope>
    <scope>FUNCTION IN MODULATING KDR SIGNALING AND IN ANGIOGENESIS</scope>
    <scope>TISSUE SPECIFICITY</scope>
</reference>
<reference key="29">
    <citation type="journal article" date="2010" name="Nature">
        <title>Ephrin-B2 controls VEGF-induced angiogenesis and lymphangiogenesis.</title>
        <authorList>
            <person name="Wang Y."/>
            <person name="Nakayama M."/>
            <person name="Pitulescu M.E."/>
            <person name="Schmidt T.S."/>
            <person name="Bochenek M.L."/>
            <person name="Sakakibara A."/>
            <person name="Adams S."/>
            <person name="Davy A."/>
            <person name="Deutsch U."/>
            <person name="Luthi U."/>
            <person name="Barberis A."/>
            <person name="Benjamin L.E."/>
            <person name="Makinen T."/>
            <person name="Nobes C.D."/>
            <person name="Adams R.H."/>
        </authorList>
    </citation>
    <scope>FUNCTION IN ACTIVATION OF SIGNALING PATHWAYS</scope>
    <scope>SUBCELLULAR LOCATION</scope>
</reference>
<reference key="30">
    <citation type="journal article" date="2011" name="Invest. Ophthalmol. Vis. Sci.">
        <title>Combined blockade of VEGFR-2 and VEGFR-3 inhibits inflammatory lymphangiogenesis in early and middle stages.</title>
        <authorList>
            <person name="Yuen D."/>
            <person name="Pytowski B."/>
            <person name="Chen L."/>
        </authorList>
    </citation>
    <scope>FUNCTION IN LYMPHANGIOGENESIS</scope>
</reference>
<reference key="31">
    <citation type="journal article" date="2008" name="Biochem. Biophys. Res. Commun.">
        <title>VEGF receptor protein-tyrosine kinases: structure and regulation.</title>
        <authorList>
            <person name="Roskoski R. Jr."/>
        </authorList>
    </citation>
    <scope>REVIEW ON STRUCTURE AND FUNCTION</scope>
</reference>
<reference key="32">
    <citation type="journal article" date="2009" name="Curr. Opin. Cell Biol.">
        <title>VEGFs and receptors involved in angiogenesis versus lymphangiogenesis.</title>
        <authorList>
            <person name="Lohela M."/>
            <person name="Bry M."/>
            <person name="Tammela T."/>
            <person name="Alitalo K."/>
        </authorList>
    </citation>
    <scope>REVIEW ON ROLE IN LYMPHANGIOGENESIS AND CANCER</scope>
</reference>
<reference key="33">
    <citation type="journal article" date="2011" name="Biochem. J.">
        <title>Signal transduction by vascular endothelial growth factor receptors.</title>
        <authorList>
            <person name="Koch S."/>
            <person name="Tugues S."/>
            <person name="Li X."/>
            <person name="Gualandi L."/>
            <person name="Claesson-Welsh L."/>
        </authorList>
    </citation>
    <scope>REVIEW ON LIGAND SPECIFICITY; FUNCTION; STRUCTURE; PHOSPHORYLATION AND SIGNALING</scope>
</reference>
<reference key="34">
    <citation type="journal article" date="2011" name="Front. Biosci.">
        <title>Lymphangiogenesis and cancer metastasis.</title>
        <authorList>
            <person name="Al-Rawi M.A."/>
            <person name="Jiang W.G."/>
        </authorList>
    </citation>
    <scope>REVIEW ON FUNCTION IN LYMPHANGIOGENESIS AND ROLE IN CANCER</scope>
</reference>
<reference key="35">
    <citation type="journal article" date="2013" name="Proc. Natl. Acad. Sci. U.S.A.">
        <title>Structural and mechanistic insights into VEGF receptor 3 ligand binding and activation.</title>
        <authorList>
            <person name="Leppanen V.M."/>
            <person name="Tvorogov D."/>
            <person name="Kisko K."/>
            <person name="Prota A.E."/>
            <person name="Jeltsch M."/>
            <person name="Anisimov A."/>
            <person name="Markovic-Mueller S."/>
            <person name="Stuttfeld E."/>
            <person name="Goldie K.N."/>
            <person name="Ballmer-Hofer K."/>
            <person name="Alitalo K."/>
        </authorList>
    </citation>
    <scope>X-RAY CRYSTALLOGRAPHY (2.50 ANGSTROMS) OF 23-229 AND 330-553 IN COMPLEX WITH VEGFC</scope>
    <scope>GLYCOSYLATION AT ASN-33; ASN-104; ASN-166; ASN-411 AND ASN-515</scope>
    <scope>DISULFIDE BOND</scope>
    <scope>INTERACTION WITH VEGFC</scope>
    <scope>MUTAGENESIS OF THR-446; LYS-516 AND ARG-737</scope>
    <scope>AUTOPHOSPHORYLATION</scope>
    <scope>HOMODIMER</scope>
    <scope>DOMAIN</scope>
</reference>
<reference key="36">
    <citation type="journal article" date="1998" name="Hum. Mol. Genet.">
        <title>Hereditary lymphedema: evidence for linkage and genetic heterogeneity.</title>
        <authorList>
            <person name="Ferrell R.E."/>
            <person name="Levinson K.L."/>
            <person name="Esman J.H."/>
            <person name="Kimak M.A."/>
            <person name="Lawrence E.C."/>
            <person name="Barmada M.M."/>
            <person name="Finegold D.N."/>
        </authorList>
    </citation>
    <scope>VARIANT LMPHM1 LEU-1114</scope>
</reference>
<reference key="37">
    <citation type="journal article" date="2000" name="Am. J. Hum. Genet.">
        <title>Congenital hereditary lymphedema caused by a mutation that inactivates VEGFR3 tyrosine kinase.</title>
        <authorList>
            <person name="Irrthum A."/>
            <person name="Karkkainen M.J."/>
            <person name="Devriendt K."/>
            <person name="Alitalo K."/>
            <person name="Vikkula M."/>
        </authorList>
    </citation>
    <scope>INVOLVEMENT IN LMPHM1</scope>
    <scope>CHARACTERIZATION OF VARIANT LMPHM1 ARG-1035</scope>
</reference>
<reference key="38">
    <citation type="journal article" date="2000" name="Nat. Genet.">
        <title>Missense mutations interfere with VEGFR-3 signalling in primary lymphoedema.</title>
        <authorList>
            <person name="Karkkainen M.J."/>
            <person name="Ferrell R.E."/>
            <person name="Lawrence E.C."/>
            <person name="Kimak M.A."/>
            <person name="Levinson K.L."/>
            <person name="McTigue M.A."/>
            <person name="Alitalo K."/>
            <person name="Finegold D.N."/>
        </authorList>
    </citation>
    <scope>VARIANTS LMPHM1 ARG-857; PRO-1041; PRO-1044 AND LEU-1114</scope>
    <scope>VARIANT SER-641</scope>
    <scope>CHARACTERIZATION OF VARIANTS</scope>
</reference>
<reference key="39">
    <citation type="journal article" date="2002" name="Genes Chromosomes Cancer">
        <title>Somatic mutation of vascular endothelial growth factor receptors in juvenile hemangioma.</title>
        <authorList>
            <person name="Walter J.W."/>
            <person name="North P.E."/>
            <person name="Waner M."/>
            <person name="Mizeracki A."/>
            <person name="Blei F."/>
            <person name="Walker J.W.T."/>
            <person name="Reinisch J.F."/>
            <person name="Marchuk D.A."/>
        </authorList>
    </citation>
    <scope>VARIANTS HCI SER-954 AND SER-1137</scope>
    <scope>VARIANTS ALA-494; GLN-890 AND HIS-1146</scope>
</reference>
<reference key="40">
    <citation type="journal article" date="2006" name="Clin. Genet.">
        <title>Hereditary lymphedema type I associated with VEGFR3 mutation: the first de novo case and atypical presentations.</title>
        <authorList>
            <person name="Ghalamkarpour A."/>
            <person name="Morlot S."/>
            <person name="Raas-Rothschild A."/>
            <person name="Utkus A."/>
            <person name="Mulliken J.B."/>
            <person name="Boon L.M."/>
            <person name="Vikkula M."/>
        </authorList>
    </citation>
    <scope>VARIANTS LMPHM1 MET-878; THR-1086 AND PHE-1108 DEL</scope>
    <scope>VARIANT GLN-1035</scope>
    <scope>INVOLVEMENT IN LMPHM1</scope>
</reference>
<reference key="41">
    <citation type="journal article" date="2006" name="J. Hum. Genet.">
        <title>Wide clinical spectrum in a family with hereditary lymphedema type I due to a novel missense mutation in VEGFR3.</title>
        <authorList>
            <person name="Spiegel R."/>
            <person name="Ghalamkarpour A."/>
            <person name="Daniel-Spiegel E."/>
            <person name="Vikkula M."/>
            <person name="Shalev S.A."/>
        </authorList>
    </citation>
    <scope>VARIANT LMPHM1 LYS-1106</scope>
    <scope>INVOLVEMENT IN LMPHM1</scope>
</reference>
<reference key="42">
    <citation type="journal article" date="2007" name="Am. J. Med. Genet. A">
        <title>A novel VEGFR3 mutation causes Milroy disease.</title>
        <authorList>
            <person name="Butler M.G."/>
            <person name="Dagenais S.L."/>
            <person name="Rockson S.G."/>
            <person name="Glover T.W."/>
        </authorList>
    </citation>
    <scope>VARIANT LMPHM1 LEU-1020</scope>
</reference>
<reference key="43">
    <citation type="journal article" date="2007" name="Nature">
        <title>Patterns of somatic mutation in human cancer genomes.</title>
        <authorList>
            <person name="Greenman C."/>
            <person name="Stephens P."/>
            <person name="Smith R."/>
            <person name="Dalgliesh G.L."/>
            <person name="Hunter C."/>
            <person name="Bignell G."/>
            <person name="Davies H."/>
            <person name="Teague J."/>
            <person name="Butler A."/>
            <person name="Stevens C."/>
            <person name="Edkins S."/>
            <person name="O'Meara S."/>
            <person name="Vastrik I."/>
            <person name="Schmidt E.E."/>
            <person name="Avis T."/>
            <person name="Barthorpe S."/>
            <person name="Bhamra G."/>
            <person name="Buck G."/>
            <person name="Choudhury B."/>
            <person name="Clements J."/>
            <person name="Cole J."/>
            <person name="Dicks E."/>
            <person name="Forbes S."/>
            <person name="Gray K."/>
            <person name="Halliday K."/>
            <person name="Harrison R."/>
            <person name="Hills K."/>
            <person name="Hinton J."/>
            <person name="Jenkinson A."/>
            <person name="Jones D."/>
            <person name="Menzies A."/>
            <person name="Mironenko T."/>
            <person name="Perry J."/>
            <person name="Raine K."/>
            <person name="Richardson D."/>
            <person name="Shepherd R."/>
            <person name="Small A."/>
            <person name="Tofts C."/>
            <person name="Varian J."/>
            <person name="Webb T."/>
            <person name="West S."/>
            <person name="Widaa S."/>
            <person name="Yates A."/>
            <person name="Cahill D.P."/>
            <person name="Louis D.N."/>
            <person name="Goldstraw P."/>
            <person name="Nicholson A.G."/>
            <person name="Brasseur F."/>
            <person name="Looijenga L."/>
            <person name="Weber B.L."/>
            <person name="Chiew Y.-E."/>
            <person name="DeFazio A."/>
            <person name="Greaves M.F."/>
            <person name="Green A.R."/>
            <person name="Campbell P."/>
            <person name="Birney E."/>
            <person name="Easton D.F."/>
            <person name="Chenevix-Trench G."/>
            <person name="Tan M.-H."/>
            <person name="Khoo S.K."/>
            <person name="Teh B.T."/>
            <person name="Yuen S.T."/>
            <person name="Leung S.Y."/>
            <person name="Wooster R."/>
            <person name="Futreal P.A."/>
            <person name="Stratton M.R."/>
        </authorList>
    </citation>
    <scope>VARIANTS [LARGE SCALE ANALYSIS] ASP-149; CYS-378; ALA-494; SER-527; SER-641; TYR-868; ILE-1010; GLN-1031; ASN-1049; GLN-1075 AND HIS-1146</scope>
</reference>
<reference key="44">
    <citation type="journal article" date="2009" name="J. Med. Genet.">
        <title>Recessive primary congenital lymphoedema caused by a VEGFR3 mutation.</title>
        <authorList>
            <person name="Ghalamkarpour A."/>
            <person name="Holnthoner W."/>
            <person name="Saharinen P."/>
            <person name="Boon L.M."/>
            <person name="Mulliken J.B."/>
            <person name="Alitalo K."/>
            <person name="Vikkula M."/>
        </authorList>
    </citation>
    <scope>VARIANT LMPHM1 THR-855</scope>
    <scope>CHARACTERIZATION OF VARIANT LMPHM1 THR-855</scope>
</reference>
<reference key="45">
    <citation type="journal article" date="2015" name="Lymphat. Res. Biol.">
        <title>A novel missense mutation in FLT4 causes autosomal recessive hereditary lymphedema.</title>
        <authorList>
            <person name="Melikhan-Revzin S."/>
            <person name="Kurolap A."/>
            <person name="Dagan E."/>
            <person name="Mory A."/>
            <person name="Gershoni-Baruch R."/>
        </authorList>
    </citation>
    <scope>VARIANT LMPHM1 CYS-1235</scope>
</reference>
<reference key="46">
    <citation type="journal article" date="2017" name="Nat. Genet.">
        <title>Contribution of rare inherited and de novo variants in 2,871 congenital heart disease probands.</title>
        <authorList>
            <person name="Jin S.C."/>
            <person name="Homsy J."/>
            <person name="Zaidi S."/>
            <person name="Lu Q."/>
            <person name="Morton S."/>
            <person name="DePalma S.R."/>
            <person name="Zeng X."/>
            <person name="Qi H."/>
            <person name="Chang W."/>
            <person name="Sierant M.C."/>
            <person name="Hung W.C."/>
            <person name="Haider S."/>
            <person name="Zhang J."/>
            <person name="Knight J."/>
            <person name="Bjornson R.D."/>
            <person name="Castaldi C."/>
            <person name="Tikhonoa I.R."/>
            <person name="Bilguvar K."/>
            <person name="Mane S.M."/>
            <person name="Sanders S.J."/>
            <person name="Mital S."/>
            <person name="Russell M.W."/>
            <person name="Gaynor J.W."/>
            <person name="Deanfield J."/>
            <person name="Giardini A."/>
            <person name="Porter G.A. Jr."/>
            <person name="Srivastava D."/>
            <person name="Lo C.W."/>
            <person name="Shen Y."/>
            <person name="Watkins W.S."/>
            <person name="Yandell M."/>
            <person name="Yost H.J."/>
            <person name="Tristani-Firouzi M."/>
            <person name="Newburger J.W."/>
            <person name="Roberts A.E."/>
            <person name="Kim R."/>
            <person name="Zhao H."/>
            <person name="Kaltman J.R."/>
            <person name="Goldmuntz E."/>
            <person name="Chung W.K."/>
            <person name="Seidman J.G."/>
            <person name="Gelb B.D."/>
            <person name="Seidman C.E."/>
            <person name="Lifton R.P."/>
            <person name="Brueckner M."/>
        </authorList>
    </citation>
    <scope>VARIANTS CHTD7 82-ARG--TYR-1363 DEL; 361-TYR--TYR-1363 DEL; 736-GLN--TYR-1363 DEL AND 999-GLN--TYR-1363 DEL</scope>
    <scope>INVOLVEMENT IN CHTD7</scope>
</reference>
<reference key="47">
    <citation type="journal article" date="2019" name="Genet. Med.">
        <title>Haploinsufficiency of vascular endothelial growth factor related signaling genes is associated with tetralogy of Fallot.</title>
        <authorList>
            <person name="Reuter M.S."/>
            <person name="Jobling R."/>
            <person name="Chaturvedi R.R."/>
            <person name="Manshaei R."/>
            <person name="Costain G."/>
            <person name="Heung T."/>
            <person name="Curtis M."/>
            <person name="Hosseini S.M."/>
            <person name="Liston E."/>
            <person name="Lowther C."/>
            <person name="Oechslin E."/>
            <person name="Sticht H."/>
            <person name="Thiruvahindrapuram B."/>
            <person name="Mil S.V."/>
            <person name="Wald R.M."/>
            <person name="Walker S."/>
            <person name="Marshall C.R."/>
            <person name="Silversides C.K."/>
            <person name="Scherer S.W."/>
            <person name="Kim R.H."/>
            <person name="Bassett A.S."/>
        </authorList>
    </citation>
    <scope>VARIANTS CHTD7 GLU-741 DEL; 833-TYR--TYR-1363 DEL; VAL-1173 AND 1192-GLN--TYR-1363 DEL</scope>
    <scope>INVOLVEMENT IN CHTD7</scope>
</reference>
<accession>P35916</accession>
<accession>A8K6L4</accession>
<accession>B5A926</accession>
<accession>Q16067</accession>
<accession>Q86W07</accession>
<accession>Q86W08</accession>